<protein>
    <recommendedName>
        <fullName>3-hydroxyacyl-CoA dehydrogenase type-2</fullName>
        <ecNumber evidence="2 4 18 20 24">1.1.1.35</ecNumber>
    </recommendedName>
    <alternativeName>
        <fullName>17-beta-estradiol 17-dehydrogenase</fullName>
        <ecNumber evidence="2 4">1.1.1.62</ecNumber>
    </alternativeName>
    <alternativeName>
        <fullName evidence="26">2-methyl-3-hydroxybutyryl-CoA dehydrogenase</fullName>
        <shortName evidence="26">MHBD</shortName>
    </alternativeName>
    <alternativeName>
        <fullName>3-alpha-(17-beta)-hydroxysteroid dehydrogenase (NAD(+))</fullName>
        <ecNumber evidence="4">1.1.1.239</ecNumber>
    </alternativeName>
    <alternativeName>
        <fullName>3-hydroxy-2-methylbutyryl-CoA dehydrogenase</fullName>
        <ecNumber evidence="10 11 12">1.1.1.178</ecNumber>
    </alternativeName>
    <alternativeName>
        <fullName>3-hydroxyacyl-CoA dehydrogenase type II</fullName>
    </alternativeName>
    <alternativeName>
        <fullName>3alpha(or 20beta)-hydroxysteroid dehydrogenase</fullName>
        <ecNumber evidence="4">1.1.1.53</ecNumber>
    </alternativeName>
    <alternativeName>
        <fullName>7-alpha-hydroxysteroid dehydrogenase</fullName>
        <ecNumber evidence="4">1.1.1.159</ecNumber>
    </alternativeName>
    <alternativeName>
        <fullName>Endoplasmic reticulum-associated amyloid beta-peptide-binding protein</fullName>
    </alternativeName>
    <alternativeName>
        <fullName>Mitochondrial ribonuclease P protein 2</fullName>
        <shortName>Mitochondrial RNase P protein 2</shortName>
    </alternativeName>
    <alternativeName>
        <fullName>Short chain dehydrogenase/reductase family 5C member 1</fullName>
    </alternativeName>
    <alternativeName>
        <fullName>Short-chain type dehydrogenase/reductase XH98G2</fullName>
    </alternativeName>
    <alternativeName>
        <fullName>Type II HADH</fullName>
    </alternativeName>
</protein>
<proteinExistence type="evidence at protein level"/>
<accession>Q99714</accession>
<accession>Q5H927</accession>
<accession>Q6IBS9</accession>
<accession>Q8TCV9</accession>
<accession>Q96HD5</accession>
<sequence>MAAACRSVKGLVAVITGGASGLGLATAERLVGQGASAVLLDLPNSGGEAQAKKLGNNCVFAPADVTSEKDVQTALALAKGKFGRVDVAVNCAGIAVASKTYNLKKGQTHTLEDFQRVLDVNLMGTFNVIRLVAGEMGQNEPDQGGQRGVIINTASVAAFEGQVGQAAYSASKGGIVGMTLPIARDLAPIGIRVMTIAPGLFGTPLLTSLPEKVCNFLASQVPFPSRLGDPAEYAHLVQAIIENPFLNGEVIRLDGAIRMQP</sequence>
<evidence type="ECO:0000250" key="1">
    <source>
        <dbReference type="UniProtKB" id="O08756"/>
    </source>
</evidence>
<evidence type="ECO:0000269" key="2">
    <source>
    </source>
</evidence>
<evidence type="ECO:0000269" key="3">
    <source>
    </source>
</evidence>
<evidence type="ECO:0000269" key="4">
    <source>
    </source>
</evidence>
<evidence type="ECO:0000269" key="5">
    <source>
    </source>
</evidence>
<evidence type="ECO:0000269" key="6">
    <source>
    </source>
</evidence>
<evidence type="ECO:0000269" key="7">
    <source>
    </source>
</evidence>
<evidence type="ECO:0000269" key="8">
    <source>
    </source>
</evidence>
<evidence type="ECO:0000269" key="9">
    <source>
    </source>
</evidence>
<evidence type="ECO:0000269" key="10">
    <source>
    </source>
</evidence>
<evidence type="ECO:0000269" key="11">
    <source>
    </source>
</evidence>
<evidence type="ECO:0000269" key="12">
    <source>
    </source>
</evidence>
<evidence type="ECO:0000269" key="13">
    <source>
    </source>
</evidence>
<evidence type="ECO:0000269" key="14">
    <source>
    </source>
</evidence>
<evidence type="ECO:0000269" key="15">
    <source>
    </source>
</evidence>
<evidence type="ECO:0000269" key="16">
    <source>
    </source>
</evidence>
<evidence type="ECO:0000269" key="17">
    <source>
    </source>
</evidence>
<evidence type="ECO:0000269" key="18">
    <source>
    </source>
</evidence>
<evidence type="ECO:0000269" key="19">
    <source>
    </source>
</evidence>
<evidence type="ECO:0000269" key="20">
    <source>
    </source>
</evidence>
<evidence type="ECO:0000269" key="21">
    <source>
    </source>
</evidence>
<evidence type="ECO:0000269" key="22">
    <source>
    </source>
</evidence>
<evidence type="ECO:0000269" key="23">
    <source>
    </source>
</evidence>
<evidence type="ECO:0000269" key="24">
    <source>
    </source>
</evidence>
<evidence type="ECO:0000303" key="25">
    <source>
    </source>
</evidence>
<evidence type="ECO:0000303" key="26">
    <source>
    </source>
</evidence>
<evidence type="ECO:0000305" key="27"/>
<evidence type="ECO:0000305" key="28">
    <source>
    </source>
</evidence>
<evidence type="ECO:0000305" key="29">
    <source>
    </source>
</evidence>
<evidence type="ECO:0000305" key="30">
    <source>
    </source>
</evidence>
<evidence type="ECO:0000305" key="31">
    <source>
    </source>
</evidence>
<evidence type="ECO:0000305" key="32">
    <source>
    </source>
</evidence>
<evidence type="ECO:0000305" key="33">
    <source>
    </source>
</evidence>
<evidence type="ECO:0000305" key="34">
    <source>
    </source>
</evidence>
<evidence type="ECO:0000305" key="35">
    <source>
    </source>
</evidence>
<evidence type="ECO:0000305" key="36">
    <source>
    </source>
</evidence>
<evidence type="ECO:0007744" key="37">
    <source>
        <dbReference type="PDB" id="1U7T"/>
    </source>
</evidence>
<evidence type="ECO:0007744" key="38">
    <source>
    </source>
</evidence>
<evidence type="ECO:0007829" key="39">
    <source>
        <dbReference type="PDB" id="2O23"/>
    </source>
</evidence>
<evidence type="ECO:0007829" key="40">
    <source>
        <dbReference type="PDB" id="9EY0"/>
    </source>
</evidence>
<evidence type="ECO:0007829" key="41">
    <source>
        <dbReference type="PDB" id="9GCH"/>
    </source>
</evidence>
<name>HCD2_HUMAN</name>
<keyword id="KW-0002">3D-structure</keyword>
<keyword id="KW-0007">Acetylation</keyword>
<keyword id="KW-0025">Alternative splicing</keyword>
<keyword id="KW-0225">Disease variant</keyword>
<keyword id="KW-0276">Fatty acid metabolism</keyword>
<keyword id="KW-0991">Intellectual disability</keyword>
<keyword id="KW-0443">Lipid metabolism</keyword>
<keyword id="KW-0496">Mitochondrion</keyword>
<keyword id="KW-1135">Mitochondrion nucleoid</keyword>
<keyword id="KW-0520">NAD</keyword>
<keyword id="KW-0523">Neurodegeneration</keyword>
<keyword id="KW-0560">Oxidoreductase</keyword>
<keyword id="KW-1267">Proteomics identification</keyword>
<keyword id="KW-1185">Reference proteome</keyword>
<keyword id="KW-0753">Steroid metabolism</keyword>
<keyword id="KW-0819">tRNA processing</keyword>
<dbReference type="EC" id="1.1.1.35" evidence="2 4 18 20 24"/>
<dbReference type="EC" id="1.1.1.62" evidence="2 4"/>
<dbReference type="EC" id="1.1.1.239" evidence="4"/>
<dbReference type="EC" id="1.1.1.178" evidence="10 11 12"/>
<dbReference type="EC" id="1.1.1.53" evidence="4"/>
<dbReference type="EC" id="1.1.1.159" evidence="4"/>
<dbReference type="EMBL" id="U96132">
    <property type="protein sequence ID" value="AAC51812.1"/>
    <property type="molecule type" value="mRNA"/>
</dbReference>
<dbReference type="EMBL" id="U73514">
    <property type="protein sequence ID" value="AAB68958.1"/>
    <property type="molecule type" value="mRNA"/>
</dbReference>
<dbReference type="EMBL" id="AF069134">
    <property type="protein sequence ID" value="AAC39900.1"/>
    <property type="molecule type" value="mRNA"/>
</dbReference>
<dbReference type="EMBL" id="AF035555">
    <property type="protein sequence ID" value="AAC15902.1"/>
    <property type="molecule type" value="mRNA"/>
</dbReference>
<dbReference type="EMBL" id="AF037438">
    <property type="protein sequence ID" value="AAC16419.1"/>
    <property type="molecule type" value="Genomic_DNA"/>
</dbReference>
<dbReference type="EMBL" id="CR456723">
    <property type="protein sequence ID" value="CAG33004.1"/>
    <property type="molecule type" value="mRNA"/>
</dbReference>
<dbReference type="EMBL" id="Z97054">
    <property type="protein sequence ID" value="CAI42652.1"/>
    <property type="molecule type" value="Genomic_DNA"/>
</dbReference>
<dbReference type="EMBL" id="Z97054">
    <property type="protein sequence ID" value="CAI42653.1"/>
    <property type="molecule type" value="Genomic_DNA"/>
</dbReference>
<dbReference type="EMBL" id="CH471154">
    <property type="protein sequence ID" value="EAW93157.1"/>
    <property type="molecule type" value="Genomic_DNA"/>
</dbReference>
<dbReference type="EMBL" id="CH471154">
    <property type="protein sequence ID" value="EAW93158.1"/>
    <property type="molecule type" value="Genomic_DNA"/>
</dbReference>
<dbReference type="EMBL" id="BC000372">
    <property type="protein sequence ID" value="AAH00372.1"/>
    <property type="molecule type" value="mRNA"/>
</dbReference>
<dbReference type="EMBL" id="BC008708">
    <property type="protein sequence ID" value="AAH08708.1"/>
    <property type="molecule type" value="mRNA"/>
</dbReference>
<dbReference type="EMBL" id="AY092415">
    <property type="protein sequence ID" value="AAM18189.1"/>
    <property type="molecule type" value="mRNA"/>
</dbReference>
<dbReference type="CCDS" id="CCDS14354.1">
    <molecule id="Q99714-1"/>
</dbReference>
<dbReference type="CCDS" id="CCDS35300.1">
    <molecule id="Q99714-2"/>
</dbReference>
<dbReference type="RefSeq" id="NP_001032900.1">
    <molecule id="Q99714-2"/>
    <property type="nucleotide sequence ID" value="NM_001037811.2"/>
</dbReference>
<dbReference type="RefSeq" id="NP_004484.1">
    <molecule id="Q99714-1"/>
    <property type="nucleotide sequence ID" value="NM_004493.3"/>
</dbReference>
<dbReference type="PDB" id="1SO8">
    <property type="method" value="X-ray"/>
    <property type="resolution" value="2.30 A"/>
    <property type="chains" value="A=1-261"/>
</dbReference>
<dbReference type="PDB" id="1U7T">
    <property type="method" value="X-ray"/>
    <property type="resolution" value="2.00 A"/>
    <property type="chains" value="A/B/C/D=1-261"/>
</dbReference>
<dbReference type="PDB" id="2O23">
    <property type="method" value="X-ray"/>
    <property type="resolution" value="1.20 A"/>
    <property type="chains" value="A/B=1-261"/>
</dbReference>
<dbReference type="PDB" id="7ONU">
    <property type="method" value="EM"/>
    <property type="resolution" value="3.00 A"/>
    <property type="chains" value="A/B/C/D=1-261"/>
</dbReference>
<dbReference type="PDB" id="8CBK">
    <property type="method" value="EM"/>
    <property type="resolution" value="2.76 A"/>
    <property type="chains" value="A/B/C/D=1-261"/>
</dbReference>
<dbReference type="PDB" id="8CBL">
    <property type="method" value="EM"/>
    <property type="resolution" value="2.79 A"/>
    <property type="chains" value="A/B/C/D=1-261"/>
</dbReference>
<dbReference type="PDB" id="8CBM">
    <property type="method" value="EM"/>
    <property type="resolution" value="3.14 A"/>
    <property type="chains" value="A/B/C/D=1-261"/>
</dbReference>
<dbReference type="PDB" id="8CBO">
    <property type="method" value="EM"/>
    <property type="resolution" value="3.20 A"/>
    <property type="chains" value="A/B/C/D=7-261"/>
</dbReference>
<dbReference type="PDB" id="8RR1">
    <property type="method" value="EM"/>
    <property type="resolution" value="2.93 A"/>
    <property type="chains" value="A/B/C/D=1-261"/>
</dbReference>
<dbReference type="PDB" id="8RR3">
    <property type="method" value="EM"/>
    <property type="resolution" value="3.40 A"/>
    <property type="chains" value="A/B/C/D=1-261"/>
</dbReference>
<dbReference type="PDB" id="8RR4">
    <property type="method" value="EM"/>
    <property type="resolution" value="3.20 A"/>
    <property type="chains" value="A/B/C/D=1-261"/>
</dbReference>
<dbReference type="PDB" id="9EY0">
    <property type="method" value="EM"/>
    <property type="resolution" value="2.78 A"/>
    <property type="chains" value="A/B/C/D=1-261"/>
</dbReference>
<dbReference type="PDB" id="9EY1">
    <property type="method" value="EM"/>
    <property type="resolution" value="2.90 A"/>
    <property type="chains" value="A/B/C/D=1-261"/>
</dbReference>
<dbReference type="PDB" id="9EY2">
    <property type="method" value="EM"/>
    <property type="resolution" value="2.96 A"/>
    <property type="chains" value="A/B/C/D=1-261"/>
</dbReference>
<dbReference type="PDB" id="9GCH">
    <property type="method" value="EM"/>
    <property type="resolution" value="1.90 A"/>
    <property type="chains" value="A/B/C/D=1-261"/>
</dbReference>
<dbReference type="PDBsum" id="1SO8"/>
<dbReference type="PDBsum" id="1U7T"/>
<dbReference type="PDBsum" id="2O23"/>
<dbReference type="PDBsum" id="7ONU"/>
<dbReference type="PDBsum" id="8CBK"/>
<dbReference type="PDBsum" id="8CBL"/>
<dbReference type="PDBsum" id="8CBM"/>
<dbReference type="PDBsum" id="8CBO"/>
<dbReference type="PDBsum" id="8RR1"/>
<dbReference type="PDBsum" id="8RR3"/>
<dbReference type="PDBsum" id="8RR4"/>
<dbReference type="PDBsum" id="9EY0"/>
<dbReference type="PDBsum" id="9EY1"/>
<dbReference type="PDBsum" id="9EY2"/>
<dbReference type="PDBsum" id="9GCH"/>
<dbReference type="EMDB" id="EMD-13002"/>
<dbReference type="EMDB" id="EMD-16543"/>
<dbReference type="EMDB" id="EMD-16544"/>
<dbReference type="EMDB" id="EMD-16545"/>
<dbReference type="EMDB" id="EMD-16547"/>
<dbReference type="EMDB" id="EMD-19453"/>
<dbReference type="EMDB" id="EMD-19455"/>
<dbReference type="EMDB" id="EMD-19457"/>
<dbReference type="EMDB" id="EMD-50050"/>
<dbReference type="EMDB" id="EMD-50051"/>
<dbReference type="EMDB" id="EMD-50052"/>
<dbReference type="EMDB" id="EMD-51230"/>
<dbReference type="SMR" id="Q99714"/>
<dbReference type="BioGRID" id="109278">
    <property type="interactions" value="564"/>
</dbReference>
<dbReference type="ComplexPortal" id="CPX-2240">
    <property type="entry name" value="Mitochondrial RNase Z complex"/>
</dbReference>
<dbReference type="ComplexPortal" id="CPX-26028">
    <property type="entry name" value="Mitochondrial CCA tRNA nucleotidyltransferase 1 complex"/>
</dbReference>
<dbReference type="ComplexPortal" id="CPX-6155">
    <property type="entry name" value="Mitochondrial ribonuclease P complex"/>
</dbReference>
<dbReference type="ComplexPortal" id="CPX-6161">
    <property type="entry name" value="Mitochondrial tRNA:m(1)R9 methyltransferase complex"/>
</dbReference>
<dbReference type="CORUM" id="Q99714"/>
<dbReference type="FunCoup" id="Q99714">
    <property type="interactions" value="589"/>
</dbReference>
<dbReference type="IntAct" id="Q99714">
    <property type="interactions" value="232"/>
</dbReference>
<dbReference type="MINT" id="Q99714"/>
<dbReference type="STRING" id="9606.ENSP00000168216"/>
<dbReference type="BindingDB" id="Q99714"/>
<dbReference type="ChEMBL" id="CHEMBL4159"/>
<dbReference type="DrugBank" id="DB02820">
    <property type="generic name" value="1-Azepan-1-Yl-2-Phenyl-2-(4-Thioxo-1,4-Dihydro-Pyrazolo[3,4-D]Pyrimidin-5-Yl)Ethanone Adduct"/>
</dbReference>
<dbReference type="DrugBank" id="DB00157">
    <property type="generic name" value="NADH"/>
</dbReference>
<dbReference type="DrugBank" id="DB09568">
    <property type="generic name" value="Omega-3-carboxylic acids"/>
</dbReference>
<dbReference type="SwissLipids" id="SLP:000000787"/>
<dbReference type="GlyGen" id="Q99714">
    <property type="glycosylation" value="1 site, 1 O-linked glycan (1 site)"/>
</dbReference>
<dbReference type="iPTMnet" id="Q99714"/>
<dbReference type="MetOSite" id="Q99714"/>
<dbReference type="PhosphoSitePlus" id="Q99714"/>
<dbReference type="SwissPalm" id="Q99714"/>
<dbReference type="BioMuta" id="HSD17B10"/>
<dbReference type="DMDM" id="2492759"/>
<dbReference type="REPRODUCTION-2DPAGE" id="IPI00017726"/>
<dbReference type="REPRODUCTION-2DPAGE" id="Q99714"/>
<dbReference type="CPTAC" id="CPTAC-522"/>
<dbReference type="CPTAC" id="CPTAC-523"/>
<dbReference type="jPOST" id="Q99714"/>
<dbReference type="MassIVE" id="Q99714"/>
<dbReference type="PaxDb" id="9606-ENSP00000168216"/>
<dbReference type="PeptideAtlas" id="Q99714"/>
<dbReference type="ProteomicsDB" id="78427">
    <molecule id="Q99714-1"/>
</dbReference>
<dbReference type="ProteomicsDB" id="78428">
    <molecule id="Q99714-2"/>
</dbReference>
<dbReference type="Pumba" id="Q99714"/>
<dbReference type="TopDownProteomics" id="Q99714-1">
    <molecule id="Q99714-1"/>
</dbReference>
<dbReference type="TopDownProteomics" id="Q99714-2">
    <molecule id="Q99714-2"/>
</dbReference>
<dbReference type="Antibodypedia" id="357">
    <property type="antibodies" value="562 antibodies from 41 providers"/>
</dbReference>
<dbReference type="DNASU" id="3028"/>
<dbReference type="Ensembl" id="ENST00000168216.11">
    <molecule id="Q99714-1"/>
    <property type="protein sequence ID" value="ENSP00000168216.6"/>
    <property type="gene ID" value="ENSG00000072506.14"/>
</dbReference>
<dbReference type="Ensembl" id="ENST00000375304.9">
    <molecule id="Q99714-2"/>
    <property type="protein sequence ID" value="ENSP00000364453.5"/>
    <property type="gene ID" value="ENSG00000072506.14"/>
</dbReference>
<dbReference type="GeneID" id="3028"/>
<dbReference type="KEGG" id="hsa:3028"/>
<dbReference type="MANE-Select" id="ENST00000168216.11">
    <property type="protein sequence ID" value="ENSP00000168216.6"/>
    <property type="RefSeq nucleotide sequence ID" value="NM_004493.3"/>
    <property type="RefSeq protein sequence ID" value="NP_004484.1"/>
</dbReference>
<dbReference type="UCSC" id="uc004dsl.2">
    <molecule id="Q99714-1"/>
    <property type="organism name" value="human"/>
</dbReference>
<dbReference type="AGR" id="HGNC:4800"/>
<dbReference type="CTD" id="3028"/>
<dbReference type="DisGeNET" id="3028"/>
<dbReference type="GeneCards" id="HSD17B10"/>
<dbReference type="HGNC" id="HGNC:4800">
    <property type="gene designation" value="HSD17B10"/>
</dbReference>
<dbReference type="HPA" id="ENSG00000072506">
    <property type="expression patterns" value="Low tissue specificity"/>
</dbReference>
<dbReference type="MalaCards" id="HSD17B10"/>
<dbReference type="MIM" id="300256">
    <property type="type" value="gene"/>
</dbReference>
<dbReference type="MIM" id="300438">
    <property type="type" value="phenotype"/>
</dbReference>
<dbReference type="neXtProt" id="NX_Q99714"/>
<dbReference type="OpenTargets" id="ENSG00000072506"/>
<dbReference type="Orphanet" id="85295">
    <property type="disease" value="HSD10 disease, atypical type"/>
</dbReference>
<dbReference type="Orphanet" id="391428">
    <property type="disease" value="HSD10 disease, infantile type"/>
</dbReference>
<dbReference type="Orphanet" id="391457">
    <property type="disease" value="HSD10 disease, neonatal type"/>
</dbReference>
<dbReference type="PharmGKB" id="PA162391638"/>
<dbReference type="VEuPathDB" id="HostDB:ENSG00000072506"/>
<dbReference type="eggNOG" id="KOG1199">
    <property type="taxonomic scope" value="Eukaryota"/>
</dbReference>
<dbReference type="GeneTree" id="ENSGT00940000155170"/>
<dbReference type="HOGENOM" id="CLU_010194_42_0_1"/>
<dbReference type="InParanoid" id="Q99714"/>
<dbReference type="OMA" id="RHIFEND"/>
<dbReference type="OrthoDB" id="1274115at2759"/>
<dbReference type="PAN-GO" id="Q99714">
    <property type="GO annotations" value="5 GO annotations based on evolutionary models"/>
</dbReference>
<dbReference type="PhylomeDB" id="Q99714"/>
<dbReference type="TreeFam" id="TF354307"/>
<dbReference type="BioCyc" id="MetaCyc:HS01071-MONOMER"/>
<dbReference type="BRENDA" id="1.1.1.135">
    <property type="organism ID" value="2681"/>
</dbReference>
<dbReference type="BRENDA" id="1.1.1.178">
    <property type="organism ID" value="2681"/>
</dbReference>
<dbReference type="BRENDA" id="1.1.1.35">
    <property type="organism ID" value="2681"/>
</dbReference>
<dbReference type="BRENDA" id="1.1.1.62">
    <property type="organism ID" value="2681"/>
</dbReference>
<dbReference type="PathwayCommons" id="Q99714"/>
<dbReference type="Reactome" id="R-HSA-6785470">
    <property type="pathway name" value="tRNA processing in the mitochondrion"/>
</dbReference>
<dbReference type="Reactome" id="R-HSA-6787450">
    <property type="pathway name" value="tRNA modification in the mitochondrion"/>
</dbReference>
<dbReference type="Reactome" id="R-HSA-70895">
    <property type="pathway name" value="Branched-chain amino acid catabolism"/>
</dbReference>
<dbReference type="Reactome" id="R-HSA-8868766">
    <property type="pathway name" value="rRNA processing in the mitochondrion"/>
</dbReference>
<dbReference type="Reactome" id="R-HSA-9837999">
    <property type="pathway name" value="Mitochondrial protein degradation"/>
</dbReference>
<dbReference type="SABIO-RK" id="Q99714"/>
<dbReference type="SignaLink" id="Q99714"/>
<dbReference type="SIGNOR" id="Q99714"/>
<dbReference type="UniPathway" id="UPA00221"/>
<dbReference type="UniPathway" id="UPA00364"/>
<dbReference type="UniPathway" id="UPA00659"/>
<dbReference type="BioGRID-ORCS" id="3028">
    <property type="hits" value="179 hits in 813 CRISPR screens"/>
</dbReference>
<dbReference type="CD-CODE" id="5965E019">
    <property type="entry name" value="mtRNA granule"/>
</dbReference>
<dbReference type="ChiTaRS" id="HSD17B10">
    <property type="organism name" value="human"/>
</dbReference>
<dbReference type="EvolutionaryTrace" id="Q99714"/>
<dbReference type="GeneWiki" id="HSD17B10"/>
<dbReference type="GenomeRNAi" id="3028"/>
<dbReference type="Pharos" id="Q99714">
    <property type="development level" value="Tchem"/>
</dbReference>
<dbReference type="PRO" id="PR:Q99714"/>
<dbReference type="Proteomes" id="UP000005640">
    <property type="component" value="Chromosome X"/>
</dbReference>
<dbReference type="RNAct" id="Q99714">
    <property type="molecule type" value="protein"/>
</dbReference>
<dbReference type="Bgee" id="ENSG00000072506">
    <property type="expression patterns" value="Expressed in right lobe of liver and 111 other cell types or tissues"/>
</dbReference>
<dbReference type="ExpressionAtlas" id="Q99714">
    <property type="expression patterns" value="baseline and differential"/>
</dbReference>
<dbReference type="GO" id="GO:0005737">
    <property type="term" value="C:cytoplasm"/>
    <property type="evidence" value="ECO:0000304"/>
    <property type="project" value="ProtInc"/>
</dbReference>
<dbReference type="GO" id="GO:0005759">
    <property type="term" value="C:mitochondrial matrix"/>
    <property type="evidence" value="ECO:0000304"/>
    <property type="project" value="Reactome"/>
</dbReference>
<dbReference type="GO" id="GO:0042645">
    <property type="term" value="C:mitochondrial nucleoid"/>
    <property type="evidence" value="ECO:0000314"/>
    <property type="project" value="UniProtKB"/>
</dbReference>
<dbReference type="GO" id="GO:0030678">
    <property type="term" value="C:mitochondrial ribonuclease P complex"/>
    <property type="evidence" value="ECO:0000314"/>
    <property type="project" value="UniProtKB"/>
</dbReference>
<dbReference type="GO" id="GO:0005739">
    <property type="term" value="C:mitochondrion"/>
    <property type="evidence" value="ECO:0000314"/>
    <property type="project" value="CAFA"/>
</dbReference>
<dbReference type="GO" id="GO:0005886">
    <property type="term" value="C:plasma membrane"/>
    <property type="evidence" value="ECO:0000304"/>
    <property type="project" value="ProtInc"/>
</dbReference>
<dbReference type="GO" id="GO:0043527">
    <property type="term" value="C:tRNA methyltransferase complex"/>
    <property type="evidence" value="ECO:0000353"/>
    <property type="project" value="ComplexPortal"/>
</dbReference>
<dbReference type="GO" id="GO:0044594">
    <property type="term" value="F:17-beta-hydroxysteroid dehydrogenase (NAD+) activity"/>
    <property type="evidence" value="ECO:0000314"/>
    <property type="project" value="UniProtKB"/>
</dbReference>
<dbReference type="GO" id="GO:0047015">
    <property type="term" value="F:3-hydroxy-2-methylbutyryl-CoA dehydrogenase activity"/>
    <property type="evidence" value="ECO:0000314"/>
    <property type="project" value="UniProtKB"/>
</dbReference>
<dbReference type="GO" id="GO:0003857">
    <property type="term" value="F:3-hydroxyacyl-CoA dehydrogenase activity"/>
    <property type="evidence" value="ECO:0000314"/>
    <property type="project" value="UniProtKB"/>
</dbReference>
<dbReference type="GO" id="GO:0047044">
    <property type="term" value="F:androstan-3-alpha,17-beta-diol dehydrogenase (NAD+) activity"/>
    <property type="evidence" value="ECO:0007669"/>
    <property type="project" value="UniProtKB-EC"/>
</dbReference>
<dbReference type="GO" id="GO:0106281">
    <property type="term" value="F:chenodeoxycholate 7-alpha-dehydrogenase (NAD+) activity"/>
    <property type="evidence" value="ECO:0000314"/>
    <property type="project" value="UniProtKB"/>
</dbReference>
<dbReference type="GO" id="GO:0008709">
    <property type="term" value="F:cholate 7-alpha-dehydrogenase (NAD+) activity"/>
    <property type="evidence" value="ECO:0000314"/>
    <property type="project" value="UniProtKB"/>
</dbReference>
<dbReference type="GO" id="GO:0004303">
    <property type="term" value="F:estradiol 17-beta-dehydrogenase [NAD(P)+] activity"/>
    <property type="evidence" value="ECO:0000318"/>
    <property type="project" value="GO_Central"/>
</dbReference>
<dbReference type="GO" id="GO:0106282">
    <property type="term" value="F:isoursodeoxycholate 7-beta-dehydrogenase (NAD+) activity"/>
    <property type="evidence" value="ECO:0000314"/>
    <property type="project" value="UniProtKB"/>
</dbReference>
<dbReference type="GO" id="GO:0003723">
    <property type="term" value="F:RNA binding"/>
    <property type="evidence" value="ECO:0007005"/>
    <property type="project" value="UniProtKB"/>
</dbReference>
<dbReference type="GO" id="GO:0047035">
    <property type="term" value="F:testosterone dehydrogenase (NAD+) activity"/>
    <property type="evidence" value="ECO:0000314"/>
    <property type="project" value="UniProtKB"/>
</dbReference>
<dbReference type="GO" id="GO:0030283">
    <property type="term" value="F:testosterone dehydrogenase [NAD(P)+] activity"/>
    <property type="evidence" value="ECO:0000314"/>
    <property type="project" value="UniProtKB"/>
</dbReference>
<dbReference type="GO" id="GO:0000049">
    <property type="term" value="F:tRNA binding"/>
    <property type="evidence" value="ECO:0000314"/>
    <property type="project" value="UniProtKB"/>
</dbReference>
<dbReference type="GO" id="GO:0106283">
    <property type="term" value="F:ursodeoxycholate 7-beta-dehydrogenase (NAD+) activity"/>
    <property type="evidence" value="ECO:0000314"/>
    <property type="project" value="UniProtKB"/>
</dbReference>
<dbReference type="GO" id="GO:0008209">
    <property type="term" value="P:androgen metabolic process"/>
    <property type="evidence" value="ECO:0000314"/>
    <property type="project" value="UniProtKB"/>
</dbReference>
<dbReference type="GO" id="GO:0006699">
    <property type="term" value="P:bile acid biosynthetic process"/>
    <property type="evidence" value="ECO:0000314"/>
    <property type="project" value="UniProtKB"/>
</dbReference>
<dbReference type="GO" id="GO:0062173">
    <property type="term" value="P:brexanolone metabolic process"/>
    <property type="evidence" value="ECO:0000314"/>
    <property type="project" value="UniProtKB"/>
</dbReference>
<dbReference type="GO" id="GO:0008207">
    <property type="term" value="P:C21-steroid hormone metabolic process"/>
    <property type="evidence" value="ECO:0000314"/>
    <property type="project" value="UniProtKB"/>
</dbReference>
<dbReference type="GO" id="GO:0008210">
    <property type="term" value="P:estrogen metabolic process"/>
    <property type="evidence" value="ECO:0000314"/>
    <property type="project" value="UniProtKB"/>
</dbReference>
<dbReference type="GO" id="GO:0006635">
    <property type="term" value="P:fatty acid beta-oxidation"/>
    <property type="evidence" value="ECO:0000314"/>
    <property type="project" value="UniProtKB"/>
</dbReference>
<dbReference type="GO" id="GO:0006631">
    <property type="term" value="P:fatty acid metabolic process"/>
    <property type="evidence" value="ECO:0000318"/>
    <property type="project" value="GO_Central"/>
</dbReference>
<dbReference type="GO" id="GO:0006550">
    <property type="term" value="P:isoleucine catabolic process"/>
    <property type="evidence" value="ECO:0000314"/>
    <property type="project" value="UniProtKB"/>
</dbReference>
<dbReference type="GO" id="GO:0006629">
    <property type="term" value="P:lipid metabolic process"/>
    <property type="evidence" value="ECO:0000304"/>
    <property type="project" value="ProtInc"/>
</dbReference>
<dbReference type="GO" id="GO:1990180">
    <property type="term" value="P:mitochondrial tRNA 3'-end processing"/>
    <property type="evidence" value="ECO:0000314"/>
    <property type="project" value="UniProtKB"/>
</dbReference>
<dbReference type="GO" id="GO:0097745">
    <property type="term" value="P:mitochondrial tRNA 5'-end processing"/>
    <property type="evidence" value="ECO:0000314"/>
    <property type="project" value="UniProtKB"/>
</dbReference>
<dbReference type="GO" id="GO:0070901">
    <property type="term" value="P:mitochondrial tRNA methylation"/>
    <property type="evidence" value="ECO:0000314"/>
    <property type="project" value="UniProtKB"/>
</dbReference>
<dbReference type="GO" id="GO:0007005">
    <property type="term" value="P:mitochondrion organization"/>
    <property type="evidence" value="ECO:0000315"/>
    <property type="project" value="UniProtKB"/>
</dbReference>
<dbReference type="GO" id="GO:0051289">
    <property type="term" value="P:protein homotetramerization"/>
    <property type="evidence" value="ECO:0000314"/>
    <property type="project" value="UniProtKB"/>
</dbReference>
<dbReference type="CDD" id="cd05371">
    <property type="entry name" value="HSD10-like_SDR_c"/>
    <property type="match status" value="1"/>
</dbReference>
<dbReference type="FunFam" id="3.40.50.720:FF:000215">
    <property type="entry name" value="3-hydroxyacyl-CoA dehydrogenase type-2"/>
    <property type="match status" value="1"/>
</dbReference>
<dbReference type="Gene3D" id="3.40.50.720">
    <property type="entry name" value="NAD(P)-binding Rossmann-like Domain"/>
    <property type="match status" value="1"/>
</dbReference>
<dbReference type="InterPro" id="IPR036291">
    <property type="entry name" value="NAD(P)-bd_dom_sf"/>
</dbReference>
<dbReference type="InterPro" id="IPR020904">
    <property type="entry name" value="Sc_DH/Rdtase_CS"/>
</dbReference>
<dbReference type="InterPro" id="IPR002347">
    <property type="entry name" value="SDR_fam"/>
</dbReference>
<dbReference type="PANTHER" id="PTHR43658:SF8">
    <property type="entry name" value="17-BETA-HYDROXYSTEROID DEHYDROGENASE 14-RELATED"/>
    <property type="match status" value="1"/>
</dbReference>
<dbReference type="PANTHER" id="PTHR43658">
    <property type="entry name" value="SHORT-CHAIN DEHYDROGENASE/REDUCTASE"/>
    <property type="match status" value="1"/>
</dbReference>
<dbReference type="Pfam" id="PF00106">
    <property type="entry name" value="adh_short"/>
    <property type="match status" value="1"/>
</dbReference>
<dbReference type="PRINTS" id="PR00081">
    <property type="entry name" value="GDHRDH"/>
</dbReference>
<dbReference type="PRINTS" id="PR00080">
    <property type="entry name" value="SDRFAMILY"/>
</dbReference>
<dbReference type="SUPFAM" id="SSF51735">
    <property type="entry name" value="NAD(P)-binding Rossmann-fold domains"/>
    <property type="match status" value="1"/>
</dbReference>
<dbReference type="PROSITE" id="PS00061">
    <property type="entry name" value="ADH_SHORT"/>
    <property type="match status" value="1"/>
</dbReference>
<gene>
    <name type="primary">HSD17B10</name>
    <name type="synonym">ERAB</name>
    <name type="synonym">HADH2</name>
    <name type="synonym">MRPP2</name>
    <name type="synonym">SCHAD</name>
    <name type="synonym">SDR5C1</name>
    <name type="synonym">XH98G2</name>
</gene>
<reference key="1">
    <citation type="journal article" date="1997" name="Nature">
        <title>An intracellular protein that binds amyloid-beta peptide and mediates neurotoxicity in Alzheimer's disease.</title>
        <authorList>
            <person name="Yan S.D."/>
            <person name="Fu J."/>
            <person name="Soto C."/>
            <person name="Chen X."/>
            <person name="Zhu H."/>
            <person name="Al-Mohanna F."/>
            <person name="Collinson K."/>
            <person name="Zhu A."/>
            <person name="Stern E."/>
            <person name="Saido T."/>
            <person name="Tohyama M."/>
            <person name="Ogawa S."/>
            <person name="Roher A."/>
            <person name="Stern D."/>
        </authorList>
    </citation>
    <scope>NUCLEOTIDE SEQUENCE [MRNA] (ISOFORM 1)</scope>
    <scope>FUNCTION</scope>
    <scope>TISSUE SPECIFICITY</scope>
    <source>
        <tissue>Brain</tissue>
    </source>
</reference>
<reference key="2">
    <citation type="submission" date="1997-01" db="EMBL/GenBank/DDBJ databases">
        <authorList>
            <person name="Zhuchenko O.P."/>
            <person name="Wehnert M."/>
            <person name="Bailey J."/>
            <person name="Sun Z.S."/>
            <person name="Lee C.C."/>
        </authorList>
    </citation>
    <scope>NUCLEOTIDE SEQUENCE [MRNA] (ISOFORM 1)</scope>
</reference>
<reference key="3">
    <citation type="journal article" date="1998" name="Proc. Natl. Acad. Sci. U.S.A.">
        <title>Chromosomal basis of X chromosome inactivation: identification of a multigene domain in Xp11.21-p11.22 that escapes X inactivation.</title>
        <authorList>
            <person name="Miller A.P."/>
            <person name="Willard H.F."/>
        </authorList>
    </citation>
    <scope>NUCLEOTIDE SEQUENCE [MRNA] (ISOFORM 1)</scope>
</reference>
<reference key="4">
    <citation type="journal article" date="1998" name="J. Biol. Chem.">
        <title>A human brain L-3-hydroxyacyl-coenzyme A dehydrogenase is identical to an amyloid beta-peptide-binding protein involved in Alzheimer's disease.</title>
        <authorList>
            <person name="He X.Y."/>
            <person name="Schulz H."/>
            <person name="Yang S.Y."/>
        </authorList>
    </citation>
    <scope>NUCLEOTIDE SEQUENCE [GENOMIC DNA / MRNA] (ISOFORM 1)</scope>
    <scope>FUNCTION</scope>
    <scope>CATALYTIC ACTIVITY</scope>
    <scope>PATHWAY</scope>
    <source>
        <tissue>Brain</tissue>
    </source>
</reference>
<reference key="5">
    <citation type="submission" date="2004-06" db="EMBL/GenBank/DDBJ databases">
        <title>Cloning of human full open reading frames in Gateway(TM) system entry vector (pDONR201).</title>
        <authorList>
            <person name="Ebert L."/>
            <person name="Schick M."/>
            <person name="Neubert P."/>
            <person name="Schatten R."/>
            <person name="Henze S."/>
            <person name="Korn B."/>
        </authorList>
    </citation>
    <scope>NUCLEOTIDE SEQUENCE [MRNA] (ISOFORM 1)</scope>
</reference>
<reference key="6">
    <citation type="journal article" date="2005" name="Nature">
        <title>The DNA sequence of the human X chromosome.</title>
        <authorList>
            <person name="Ross M.T."/>
            <person name="Grafham D.V."/>
            <person name="Coffey A.J."/>
            <person name="Scherer S."/>
            <person name="McLay K."/>
            <person name="Muzny D."/>
            <person name="Platzer M."/>
            <person name="Howell G.R."/>
            <person name="Burrows C."/>
            <person name="Bird C.P."/>
            <person name="Frankish A."/>
            <person name="Lovell F.L."/>
            <person name="Howe K.L."/>
            <person name="Ashurst J.L."/>
            <person name="Fulton R.S."/>
            <person name="Sudbrak R."/>
            <person name="Wen G."/>
            <person name="Jones M.C."/>
            <person name="Hurles M.E."/>
            <person name="Andrews T.D."/>
            <person name="Scott C.E."/>
            <person name="Searle S."/>
            <person name="Ramser J."/>
            <person name="Whittaker A."/>
            <person name="Deadman R."/>
            <person name="Carter N.P."/>
            <person name="Hunt S.E."/>
            <person name="Chen R."/>
            <person name="Cree A."/>
            <person name="Gunaratne P."/>
            <person name="Havlak P."/>
            <person name="Hodgson A."/>
            <person name="Metzker M.L."/>
            <person name="Richards S."/>
            <person name="Scott G."/>
            <person name="Steffen D."/>
            <person name="Sodergren E."/>
            <person name="Wheeler D.A."/>
            <person name="Worley K.C."/>
            <person name="Ainscough R."/>
            <person name="Ambrose K.D."/>
            <person name="Ansari-Lari M.A."/>
            <person name="Aradhya S."/>
            <person name="Ashwell R.I."/>
            <person name="Babbage A.K."/>
            <person name="Bagguley C.L."/>
            <person name="Ballabio A."/>
            <person name="Banerjee R."/>
            <person name="Barker G.E."/>
            <person name="Barlow K.F."/>
            <person name="Barrett I.P."/>
            <person name="Bates K.N."/>
            <person name="Beare D.M."/>
            <person name="Beasley H."/>
            <person name="Beasley O."/>
            <person name="Beck A."/>
            <person name="Bethel G."/>
            <person name="Blechschmidt K."/>
            <person name="Brady N."/>
            <person name="Bray-Allen S."/>
            <person name="Bridgeman A.M."/>
            <person name="Brown A.J."/>
            <person name="Brown M.J."/>
            <person name="Bonnin D."/>
            <person name="Bruford E.A."/>
            <person name="Buhay C."/>
            <person name="Burch P."/>
            <person name="Burford D."/>
            <person name="Burgess J."/>
            <person name="Burrill W."/>
            <person name="Burton J."/>
            <person name="Bye J.M."/>
            <person name="Carder C."/>
            <person name="Carrel L."/>
            <person name="Chako J."/>
            <person name="Chapman J.C."/>
            <person name="Chavez D."/>
            <person name="Chen E."/>
            <person name="Chen G."/>
            <person name="Chen Y."/>
            <person name="Chen Z."/>
            <person name="Chinault C."/>
            <person name="Ciccodicola A."/>
            <person name="Clark S.Y."/>
            <person name="Clarke G."/>
            <person name="Clee C.M."/>
            <person name="Clegg S."/>
            <person name="Clerc-Blankenburg K."/>
            <person name="Clifford K."/>
            <person name="Cobley V."/>
            <person name="Cole C.G."/>
            <person name="Conquer J.S."/>
            <person name="Corby N."/>
            <person name="Connor R.E."/>
            <person name="David R."/>
            <person name="Davies J."/>
            <person name="Davis C."/>
            <person name="Davis J."/>
            <person name="Delgado O."/>
            <person name="Deshazo D."/>
            <person name="Dhami P."/>
            <person name="Ding Y."/>
            <person name="Dinh H."/>
            <person name="Dodsworth S."/>
            <person name="Draper H."/>
            <person name="Dugan-Rocha S."/>
            <person name="Dunham A."/>
            <person name="Dunn M."/>
            <person name="Durbin K.J."/>
            <person name="Dutta I."/>
            <person name="Eades T."/>
            <person name="Ellwood M."/>
            <person name="Emery-Cohen A."/>
            <person name="Errington H."/>
            <person name="Evans K.L."/>
            <person name="Faulkner L."/>
            <person name="Francis F."/>
            <person name="Frankland J."/>
            <person name="Fraser A.E."/>
            <person name="Galgoczy P."/>
            <person name="Gilbert J."/>
            <person name="Gill R."/>
            <person name="Gloeckner G."/>
            <person name="Gregory S.G."/>
            <person name="Gribble S."/>
            <person name="Griffiths C."/>
            <person name="Grocock R."/>
            <person name="Gu Y."/>
            <person name="Gwilliam R."/>
            <person name="Hamilton C."/>
            <person name="Hart E.A."/>
            <person name="Hawes A."/>
            <person name="Heath P.D."/>
            <person name="Heitmann K."/>
            <person name="Hennig S."/>
            <person name="Hernandez J."/>
            <person name="Hinzmann B."/>
            <person name="Ho S."/>
            <person name="Hoffs M."/>
            <person name="Howden P.J."/>
            <person name="Huckle E.J."/>
            <person name="Hume J."/>
            <person name="Hunt P.J."/>
            <person name="Hunt A.R."/>
            <person name="Isherwood J."/>
            <person name="Jacob L."/>
            <person name="Johnson D."/>
            <person name="Jones S."/>
            <person name="de Jong P.J."/>
            <person name="Joseph S.S."/>
            <person name="Keenan S."/>
            <person name="Kelly S."/>
            <person name="Kershaw J.K."/>
            <person name="Khan Z."/>
            <person name="Kioschis P."/>
            <person name="Klages S."/>
            <person name="Knights A.J."/>
            <person name="Kosiura A."/>
            <person name="Kovar-Smith C."/>
            <person name="Laird G.K."/>
            <person name="Langford C."/>
            <person name="Lawlor S."/>
            <person name="Leversha M."/>
            <person name="Lewis L."/>
            <person name="Liu W."/>
            <person name="Lloyd C."/>
            <person name="Lloyd D.M."/>
            <person name="Loulseged H."/>
            <person name="Loveland J.E."/>
            <person name="Lovell J.D."/>
            <person name="Lozado R."/>
            <person name="Lu J."/>
            <person name="Lyne R."/>
            <person name="Ma J."/>
            <person name="Maheshwari M."/>
            <person name="Matthews L.H."/>
            <person name="McDowall J."/>
            <person name="McLaren S."/>
            <person name="McMurray A."/>
            <person name="Meidl P."/>
            <person name="Meitinger T."/>
            <person name="Milne S."/>
            <person name="Miner G."/>
            <person name="Mistry S.L."/>
            <person name="Morgan M."/>
            <person name="Morris S."/>
            <person name="Mueller I."/>
            <person name="Mullikin J.C."/>
            <person name="Nguyen N."/>
            <person name="Nordsiek G."/>
            <person name="Nyakatura G."/>
            <person name="O'dell C.N."/>
            <person name="Okwuonu G."/>
            <person name="Palmer S."/>
            <person name="Pandian R."/>
            <person name="Parker D."/>
            <person name="Parrish J."/>
            <person name="Pasternak S."/>
            <person name="Patel D."/>
            <person name="Pearce A.V."/>
            <person name="Pearson D.M."/>
            <person name="Pelan S.E."/>
            <person name="Perez L."/>
            <person name="Porter K.M."/>
            <person name="Ramsey Y."/>
            <person name="Reichwald K."/>
            <person name="Rhodes S."/>
            <person name="Ridler K.A."/>
            <person name="Schlessinger D."/>
            <person name="Schueler M.G."/>
            <person name="Sehra H.K."/>
            <person name="Shaw-Smith C."/>
            <person name="Shen H."/>
            <person name="Sheridan E.M."/>
            <person name="Shownkeen R."/>
            <person name="Skuce C.D."/>
            <person name="Smith M.L."/>
            <person name="Sotheran E.C."/>
            <person name="Steingruber H.E."/>
            <person name="Steward C.A."/>
            <person name="Storey R."/>
            <person name="Swann R.M."/>
            <person name="Swarbreck D."/>
            <person name="Tabor P.E."/>
            <person name="Taudien S."/>
            <person name="Taylor T."/>
            <person name="Teague B."/>
            <person name="Thomas K."/>
            <person name="Thorpe A."/>
            <person name="Timms K."/>
            <person name="Tracey A."/>
            <person name="Trevanion S."/>
            <person name="Tromans A.C."/>
            <person name="d'Urso M."/>
            <person name="Verduzco D."/>
            <person name="Villasana D."/>
            <person name="Waldron L."/>
            <person name="Wall M."/>
            <person name="Wang Q."/>
            <person name="Warren J."/>
            <person name="Warry G.L."/>
            <person name="Wei X."/>
            <person name="West A."/>
            <person name="Whitehead S.L."/>
            <person name="Whiteley M.N."/>
            <person name="Wilkinson J.E."/>
            <person name="Willey D.L."/>
            <person name="Williams G."/>
            <person name="Williams L."/>
            <person name="Williamson A."/>
            <person name="Williamson H."/>
            <person name="Wilming L."/>
            <person name="Woodmansey R.L."/>
            <person name="Wray P.W."/>
            <person name="Yen J."/>
            <person name="Zhang J."/>
            <person name="Zhou J."/>
            <person name="Zoghbi H."/>
            <person name="Zorilla S."/>
            <person name="Buck D."/>
            <person name="Reinhardt R."/>
            <person name="Poustka A."/>
            <person name="Rosenthal A."/>
            <person name="Lehrach H."/>
            <person name="Meindl A."/>
            <person name="Minx P.J."/>
            <person name="Hillier L.W."/>
            <person name="Willard H.F."/>
            <person name="Wilson R.K."/>
            <person name="Waterston R.H."/>
            <person name="Rice C.M."/>
            <person name="Vaudin M."/>
            <person name="Coulson A."/>
            <person name="Nelson D.L."/>
            <person name="Weinstock G."/>
            <person name="Sulston J.E."/>
            <person name="Durbin R.M."/>
            <person name="Hubbard T."/>
            <person name="Gibbs R.A."/>
            <person name="Beck S."/>
            <person name="Rogers J."/>
            <person name="Bentley D.R."/>
        </authorList>
    </citation>
    <scope>NUCLEOTIDE SEQUENCE [LARGE SCALE GENOMIC DNA]</scope>
</reference>
<reference key="7">
    <citation type="submission" date="2005-07" db="EMBL/GenBank/DDBJ databases">
        <authorList>
            <person name="Mural R.J."/>
            <person name="Istrail S."/>
            <person name="Sutton G.G."/>
            <person name="Florea L."/>
            <person name="Halpern A.L."/>
            <person name="Mobarry C.M."/>
            <person name="Lippert R."/>
            <person name="Walenz B."/>
            <person name="Shatkay H."/>
            <person name="Dew I."/>
            <person name="Miller J.R."/>
            <person name="Flanigan M.J."/>
            <person name="Edwards N.J."/>
            <person name="Bolanos R."/>
            <person name="Fasulo D."/>
            <person name="Halldorsson B.V."/>
            <person name="Hannenhalli S."/>
            <person name="Turner R."/>
            <person name="Yooseph S."/>
            <person name="Lu F."/>
            <person name="Nusskern D.R."/>
            <person name="Shue B.C."/>
            <person name="Zheng X.H."/>
            <person name="Zhong F."/>
            <person name="Delcher A.L."/>
            <person name="Huson D.H."/>
            <person name="Kravitz S.A."/>
            <person name="Mouchard L."/>
            <person name="Reinert K."/>
            <person name="Remington K.A."/>
            <person name="Clark A.G."/>
            <person name="Waterman M.S."/>
            <person name="Eichler E.E."/>
            <person name="Adams M.D."/>
            <person name="Hunkapiller M.W."/>
            <person name="Myers E.W."/>
            <person name="Venter J.C."/>
        </authorList>
    </citation>
    <scope>NUCLEOTIDE SEQUENCE [LARGE SCALE GENOMIC DNA]</scope>
</reference>
<reference key="8">
    <citation type="journal article" date="2004" name="Genome Res.">
        <title>The status, quality, and expansion of the NIH full-length cDNA project: the Mammalian Gene Collection (MGC).</title>
        <authorList>
            <consortium name="The MGC Project Team"/>
        </authorList>
    </citation>
    <scope>NUCLEOTIDE SEQUENCE [LARGE SCALE MRNA] (ISOFORMS 1 AND 2)</scope>
    <source>
        <tissue>Brain</tissue>
        <tissue>Lung</tissue>
    </source>
</reference>
<reference key="9">
    <citation type="submission" date="2002-03" db="EMBL/GenBank/DDBJ databases">
        <title>Expression, release and induction of endoplasmic reticulum-associated amyloid beta-binding protein in brain disease.</title>
        <authorList>
            <person name="Deininger M.H."/>
            <person name="Meyermann R."/>
            <person name="Schluesener H.J."/>
        </authorList>
    </citation>
    <scope>NUCLEOTIDE SEQUENCE [MRNA] OF 51-246</scope>
</reference>
<reference key="10">
    <citation type="journal article" date="2000" name="Biochem. J.">
        <title>Intrinsic alcohol dehydrogenase and hydroxysteroid dehydrogenase activities of human mitochondrial short-chain L-3-hydroxyacyl-CoA dehydrogenase.</title>
        <authorList>
            <person name="He X.Y."/>
            <person name="Yang Y.Z."/>
            <person name="Schulz H."/>
            <person name="Yang S.Y."/>
        </authorList>
    </citation>
    <scope>FUNCTION</scope>
    <scope>CATALYTIC ACTIVITY</scope>
    <scope>PATHWAY</scope>
</reference>
<reference key="11">
    <citation type="journal article" date="2003" name="Biochem. J.">
        <title>Expanded substrate screenings of human and Drosophila type 10 17beta-hydroxysteroid dehydrogenases (HSDs) reveal multiple specificities in bile acid and steroid hormone metabolism: characterization of multifunctional 3alpha/7alpha/7beta/17beta/20beta/21-HSD.</title>
        <authorList>
            <person name="Shafqat N."/>
            <person name="Marschall H.U."/>
            <person name="Filling C."/>
            <person name="Nordling E."/>
            <person name="Wu X.Q."/>
            <person name="Bjork L."/>
            <person name="Thyberg J."/>
            <person name="Martensson E."/>
            <person name="Salim S."/>
            <person name="Jornvall H."/>
            <person name="Oppermann U."/>
        </authorList>
    </citation>
    <scope>FUNCTION</scope>
    <scope>CATALYTIC ACTIVITY</scope>
    <scope>BIOPHYSICOCHEMICAL PROPERTIES</scope>
    <scope>SUBCELLULAR LOCATION</scope>
    <scope>PATHWAY</scope>
</reference>
<reference key="12">
    <citation type="journal article" date="2007" name="Am. J. Hum. Genet.">
        <title>The reduced expression of the HADH2 protein causes X-linked mental retardation, choreoathetosis, and abnormal behavior.</title>
        <authorList>
            <person name="Lenski C."/>
            <person name="Kooy R.F."/>
            <person name="Reyniers E."/>
            <person name="Loessner D."/>
            <person name="Wanders R.J.A."/>
            <person name="Winnepenninckx B."/>
            <person name="Hellebrand H."/>
            <person name="Engert S."/>
            <person name="Schwartz C.E."/>
            <person name="Meindl A."/>
            <person name="Ramser J."/>
        </authorList>
    </citation>
    <scope>INVOLVEMENT IN HSD10MD</scope>
</reference>
<reference key="13">
    <citation type="journal article" date="2008" name="Cell">
        <title>RNase P without RNA: identification and functional reconstitution of the human mitochondrial tRNA processing enzyme.</title>
        <authorList>
            <person name="Holzmann J."/>
            <person name="Frank P."/>
            <person name="Loeffler E."/>
            <person name="Bennett K.L."/>
            <person name="Gerner C."/>
            <person name="Rossmanith W."/>
        </authorList>
    </citation>
    <scope>IDENTIFICATION BY MASS SPECTROMETRY</scope>
    <scope>FUNCTION</scope>
    <scope>INTERACTION WITH KIAA0391 AND TRMT10C</scope>
    <scope>SUBCELLULAR LOCATION</scope>
</reference>
<reference key="14">
    <citation type="journal article" date="2011" name="BMC Syst. Biol.">
        <title>Initial characterization of the human central proteome.</title>
        <authorList>
            <person name="Burkard T.R."/>
            <person name="Planyavsky M."/>
            <person name="Kaupe I."/>
            <person name="Breitwieser F.P."/>
            <person name="Buerckstuemmer T."/>
            <person name="Bennett K.L."/>
            <person name="Superti-Furga G."/>
            <person name="Colinge J."/>
        </authorList>
    </citation>
    <scope>IDENTIFICATION BY MASS SPECTROMETRY [LARGE SCALE ANALYSIS]</scope>
</reference>
<reference key="15">
    <citation type="journal article" date="2012" name="Nucleic Acids Res.">
        <title>A subcomplex of human mitochondrial RNase P is a bifunctional methyltransferase--extensive moonlighting in mitochondrial tRNA biogenesis.</title>
        <authorList>
            <person name="Vilardo E."/>
            <person name="Nachbagauer C."/>
            <person name="Buzet A."/>
            <person name="Taschner A."/>
            <person name="Holzmann J."/>
            <person name="Rossmanith W."/>
        </authorList>
    </citation>
    <scope>FUNCTION</scope>
    <scope>INTERACTION WITH TRMT10C</scope>
    <scope>MUTAGENESIS OF SER-20 AND LYS-172</scope>
</reference>
<reference key="16">
    <citation type="journal article" date="2014" name="Cell Metab.">
        <title>Initial steps in RNA processing and ribosome assembly occur at mitochondrial DNA nucleoids.</title>
        <authorList>
            <person name="Bogenhagen D.F."/>
            <person name="Martin D.W."/>
            <person name="Koller A."/>
        </authorList>
    </citation>
    <scope>IDENTIFICATION BY MASS SPECTROMETRY</scope>
    <scope>SUBCELLULAR LOCATION</scope>
    <scope>FUNCTION</scope>
</reference>
<reference key="17">
    <citation type="journal article" date="2014" name="J. Proteomics">
        <title>An enzyme assisted RP-RPLC approach for in-depth analysis of human liver phosphoproteome.</title>
        <authorList>
            <person name="Bian Y."/>
            <person name="Song C."/>
            <person name="Cheng K."/>
            <person name="Dong M."/>
            <person name="Wang F."/>
            <person name="Huang J."/>
            <person name="Sun D."/>
            <person name="Wang L."/>
            <person name="Ye M."/>
            <person name="Zou H."/>
        </authorList>
    </citation>
    <scope>IDENTIFICATION BY MASS SPECTROMETRY [LARGE SCALE ANALYSIS]</scope>
    <source>
        <tissue>Liver</tissue>
    </source>
</reference>
<reference key="18">
    <citation type="journal article" date="2015" name="Genes Dev.">
        <title>Myxococcus CsgA, Drosophila Sniffer, and human HSD10 are cardiolipin phospholipases.</title>
        <authorList>
            <person name="Boynton T.O."/>
            <person name="Shimkets L.J."/>
        </authorList>
    </citation>
    <scope>FUNCTION</scope>
    <scope>ACTIVITY REGULATION</scope>
    <scope>BIOPHYSICOCHEMICAL PROPERTIES</scope>
    <scope>VARIANTS HSD10MD GLY-86; CYS-130 AND HIS-165</scope>
</reference>
<reference key="19">
    <citation type="journal article" date="2015" name="Mitochondrion">
        <title>Mitochondrial energy failure in HSD10 disease is due to defective mtDNA transcript processing.</title>
        <authorList>
            <person name="Chatfield K.C."/>
            <person name="Coughlin C.R. II"/>
            <person name="Friederich M.W."/>
            <person name="Gallagher R.C."/>
            <person name="Hesselberth J.R."/>
            <person name="Lovell M.A."/>
            <person name="Ofman R."/>
            <person name="Swanson M.A."/>
            <person name="Thomas J.A."/>
            <person name="Wanders R.J."/>
            <person name="Wartchow E.P."/>
            <person name="Van Hove J.L."/>
        </authorList>
    </citation>
    <scope>INVOLVEMENT IN HSD10MD</scope>
</reference>
<reference key="20">
    <citation type="journal article" date="2015" name="Proteomics">
        <title>N-terminome analysis of the human mitochondrial proteome.</title>
        <authorList>
            <person name="Vaca Jacome A.S."/>
            <person name="Rabilloud T."/>
            <person name="Schaeffer-Reiss C."/>
            <person name="Rompais M."/>
            <person name="Ayoub D."/>
            <person name="Lane L."/>
            <person name="Bairoch A."/>
            <person name="Van Dorsselaer A."/>
            <person name="Carapito C."/>
        </authorList>
    </citation>
    <scope>ACETYLATION [LARGE SCALE ANALYSIS] AT ALA-2</scope>
    <scope>CLEAVAGE OF INITIATOR METHIONINE [LARGE SCALE ANALYSIS]</scope>
    <scope>IDENTIFICATION BY MASS SPECTROMETRY [LARGE SCALE ANALYSIS]</scope>
</reference>
<reference key="21">
    <citation type="journal article" date="2017" name="Nucleic Acids Res.">
        <title>The MRPP1/MRPP2 complex is a tRNA-maturation platform in human mitochondria.</title>
        <authorList>
            <person name="Reinhard L."/>
            <person name="Sridhara S."/>
            <person name="Haellberg B.M."/>
        </authorList>
    </citation>
    <scope>FUNCTION</scope>
    <scope>INTERACTION WITH TRMT10C</scope>
</reference>
<reference evidence="37" key="22">
    <citation type="journal article" date="2004" name="J. Mol. Biol.">
        <title>Crystal structure of human ABAD/HSD10 with a bound inhibitor: implications for design of Alzheimer's disease therapeutics.</title>
        <authorList>
            <person name="Kissinger C.R."/>
            <person name="Rejto P.A."/>
            <person name="Pelletier L.A."/>
            <person name="Thomson J.A."/>
            <person name="Showalter R.E."/>
            <person name="Abreo M.A."/>
            <person name="Agree C.S."/>
            <person name="Margosiak S."/>
            <person name="Meng J.J."/>
            <person name="Aust R.M."/>
            <person name="Vanderpool D."/>
            <person name="Li B."/>
            <person name="Tempczyk-Russell A."/>
            <person name="Villafranca J.E."/>
        </authorList>
    </citation>
    <scope>X-RAY CRYSTALLOGRAPHY (2.0 ANGSTROMS) IN COMPLEX WITH NAD</scope>
</reference>
<reference key="23">
    <citation type="journal article" date="2004" name="Science">
        <title>ABAD directly links Abeta to mitochondrial toxicity in Alzheimer's disease.</title>
        <authorList>
            <person name="Lustbader J.W."/>
            <person name="Cirilli M."/>
            <person name="Lin C."/>
            <person name="Xu H.W."/>
            <person name="Takuma K."/>
            <person name="Wang N."/>
            <person name="Caspersen C."/>
            <person name="Chen X."/>
            <person name="Pollak S."/>
            <person name="Chaney M."/>
            <person name="Trinchese F."/>
            <person name="Liu S."/>
            <person name="Gunn-Moore F."/>
            <person name="Lue L.-F."/>
            <person name="Walker D.G."/>
            <person name="Kuppusamy P."/>
            <person name="Zewier Z.L."/>
            <person name="Arancio O."/>
            <person name="Stern D."/>
            <person name="Yan S.-S."/>
            <person name="Wu H."/>
        </authorList>
    </citation>
    <scope>X-RAY CRYSTALLOGRAPHY (2.3 ANGSTROMS)</scope>
</reference>
<reference key="24">
    <citation type="journal article" date="2010" name="EMBO Mol. Med.">
        <title>A non-enzymatic function of 17beta-hydroxysteroid dehydrogenase type 10 is required for mitochondrial integrity and cell survival.</title>
        <authorList>
            <person name="Rauschenberger K."/>
            <person name="Schoeler K."/>
            <person name="Sass J.O."/>
            <person name="Sauer S."/>
            <person name="Djuric Z."/>
            <person name="Rumig C."/>
            <person name="Wolf N.I."/>
            <person name="Okun J.G."/>
            <person name="Koelker S."/>
            <person name="Schwarz H."/>
            <person name="Fischer C."/>
            <person name="Grziwa B."/>
            <person name="Runz H."/>
            <person name="Nuemann A."/>
            <person name="Shafqat N."/>
            <person name="Kavanagh K.L."/>
            <person name="Haemmerling G."/>
            <person name="Wanders R.J."/>
            <person name="Shield J.P."/>
            <person name="Wendel U."/>
            <person name="Stern D."/>
            <person name="Nawroth P."/>
            <person name="Hoffmann G.F."/>
            <person name="Bartram C.R."/>
            <person name="Arnold B."/>
            <person name="Bierhaus A."/>
            <person name="Oppermann U."/>
            <person name="Steinbeisser H."/>
            <person name="Zschocke J."/>
        </authorList>
    </citation>
    <scope>X-RAY CRYSTALLOGRAPHY (1.20 ANGSTROMS)</scope>
    <scope>FUNCTION</scope>
    <scope>CATALYTIC ACTIVITY</scope>
    <scope>SUBUNIT</scope>
    <scope>VARIANTS HSD10MD GLY-86; CYS-130 AND HIS-165</scope>
    <scope>CHARACTERIZATION OF VARIANTS HSD10MD GLY-86; CYS-130 AND HIS-165</scope>
</reference>
<reference key="25">
    <citation type="journal article" date="2003" name="Am. J. Hum. Genet.">
        <title>2-methyl-3-hydroxybutyryl-CoA dehydrogenase deficiency is caused by mutations in the HADH2 gene.</title>
        <authorList>
            <person name="Ofman R."/>
            <person name="Ruiter J.P.N."/>
            <person name="Feenstra M."/>
            <person name="Duran M."/>
            <person name="Poll-The B.T."/>
            <person name="Zschocke J."/>
            <person name="Ensenauer R."/>
            <person name="Lehnert W."/>
            <person name="Sass J.O."/>
            <person name="Sperl W."/>
            <person name="Wanders R.J.A."/>
        </authorList>
    </citation>
    <scope>VARIANTS HSD10MD VAL-122 AND CYS-130</scope>
</reference>
<reference key="26">
    <citation type="journal article" date="2005" name="Pediatr. Res.">
        <title>2-methyl-3-hydroxybutyryl-CoA dehydrogenase (MHBD) deficiency: an X-linked inborn error of isoleucine metabolism that may mimic a mitochondrial disease.</title>
        <authorList>
            <person name="Perez-Cerda C."/>
            <person name="Garcia-Villoria J."/>
            <person name="Ofman R."/>
            <person name="Sala P.R."/>
            <person name="Merinero B."/>
            <person name="Ramos J."/>
            <person name="Garcia-Silva M.T."/>
            <person name="Beseler B."/>
            <person name="Dalmau J."/>
            <person name="Wanders R.J.A."/>
            <person name="Ugarte M."/>
            <person name="Ribes A."/>
        </authorList>
    </citation>
    <scope>VARIANTS HSD10MD CYS-130 AND SER-247</scope>
    <scope>CHARACTERIZATION OF VARIANT HSD10MD SER-247</scope>
</reference>
<reference key="27">
    <citation type="journal article" date="2006" name="Pediatr. Res.">
        <authorList>
            <person name="Perez-Cerda C."/>
            <person name="Garcia-Villoria J."/>
            <person name="Ofman R."/>
            <person name="Sala P.R."/>
            <person name="Merinero B."/>
            <person name="Ramos J."/>
            <person name="Garcia-Silva M.T."/>
            <person name="Beseler B."/>
            <person name="Dalmau J."/>
            <person name="Wanders R.J."/>
            <person name="Ugarte M."/>
            <person name="Ribes A."/>
        </authorList>
    </citation>
    <scope>ERRATUM OF PUBMED:16148061</scope>
</reference>
<reference key="28">
    <citation type="journal article" date="2009" name="Clin. Biochem.">
        <title>Study of patients and carriers with 2-methyl-3-hydroxybutyryl-CoA dehydrogenase (MHBD) deficiency: difficulties in the diagnosis.</title>
        <authorList>
            <person name="Garcia-Villoria J."/>
            <person name="Navarro-Sastre A."/>
            <person name="Fons C."/>
            <person name="Perez-Cerda C."/>
            <person name="Baldellou A."/>
            <person name="Fuentes-Castello M.A."/>
            <person name="Gonzalez I."/>
            <person name="Hernandez-Gonzalez A."/>
            <person name="Fernandez C."/>
            <person name="Campistol J."/>
            <person name="Delpiccolo C."/>
            <person name="Cortes N."/>
            <person name="Messeguer A."/>
            <person name="Briones P."/>
            <person name="Ribes A."/>
        </authorList>
    </citation>
    <scope>VARIANTS HSD10MD CYS-130; SER-210; GLN-226 AND SER-247</scope>
    <scope>FUNCTION</scope>
    <scope>CATALYTIC ACTIVITY</scope>
</reference>
<reference key="29">
    <citation type="journal article" date="2009" name="Proc. Natl. Acad. Sci. U.S.A.">
        <title>Mental retardation linked to mutations in the HSD17B10 gene interfering with neurosteroid and isoleucine metabolism.</title>
        <authorList>
            <person name="Yang S.Y."/>
            <person name="He X.Y."/>
            <person name="Olpin S.E."/>
            <person name="Sutton V.R."/>
            <person name="McMenamin J."/>
            <person name="Philipp M."/>
            <person name="Denman R.B."/>
            <person name="Malik M."/>
        </authorList>
    </citation>
    <scope>VARIANTS HSD10MD CYS-130 AND GLN-249</scope>
    <scope>CHARACTERIZATION OF VARIANTS HSD10MD CYS-130 AND GLN-249</scope>
    <scope>FUNCTION</scope>
    <scope>CATALYTIC ACTIVITY</scope>
    <scope>BIOPHYSICOCHEMICAL PROPERTIES</scope>
    <scope>PATHWAY</scope>
</reference>
<reference key="30">
    <citation type="journal article" date="2011" name="PLoS ONE">
        <title>A novel mutation in the HSD17B10 gene of a 10-year-old boy with refractory epilepsy, choreoathetosis and learning disability.</title>
        <authorList>
            <person name="Seaver L.H."/>
            <person name="He X.Y."/>
            <person name="Abe K."/>
            <person name="Cowan T."/>
            <person name="Enns G.M."/>
            <person name="Sweetman L."/>
            <person name="Philipp M."/>
            <person name="Lee S."/>
            <person name="Malik M."/>
            <person name="Yang S.Y."/>
        </authorList>
    </citation>
    <scope>VARIANT HSD10MD ALA-65</scope>
</reference>
<reference key="31">
    <citation type="journal article" date="2014" name="Hum. Mol. Genet.">
        <title>Mutation or knock-down of 17beta-hydroxysteroid dehydrogenase type 10 cause loss of MRPP1 and impaired processing of mitochondrial heavy strand transcripts.</title>
        <authorList>
            <person name="Deutschmann A.J."/>
            <person name="Amberger A."/>
            <person name="Zavadil C."/>
            <person name="Steinbeisser H."/>
            <person name="Mayr J.A."/>
            <person name="Feichtinger R.G."/>
            <person name="Oerum S."/>
            <person name="Yue W.W."/>
            <person name="Zschocke J."/>
        </authorList>
    </citation>
    <scope>VARIANTS HSD10MD CYS-130 AND HIS-165</scope>
    <scope>CHARACTERIZATION OF VARIANT HSD10MD CYS-130</scope>
    <scope>FUNCTION</scope>
</reference>
<reference key="32">
    <citation type="journal article" date="2015" name="Nucleic Acids Res.">
        <title>Molecular insights into HSD10 disease: impact of SDR5C1 mutations on the human mitochondrial RNase P complex.</title>
        <authorList>
            <person name="Vilardo E."/>
            <person name="Rossmanith W."/>
        </authorList>
    </citation>
    <scope>VARIANTS HSD10MD CYS-130; SER-210; GLN-226 AND SER-247</scope>
    <scope>FUNCTION</scope>
    <scope>CATALYTIC ACTIVITY</scope>
    <scope>SUBUNIT</scope>
    <scope>MUTAGENESIS OF LYS-172</scope>
    <scope>CHARACTERIZATION OF VARIANTS HSD10MD CYS-130; SER-210; GLN-226 AND SER-247</scope>
</reference>
<reference key="33">
    <citation type="journal article" date="2016" name="RNA Biol.">
        <title>A novel HSD17B10 mutation impairing the activities of the mitochondrial RNase P complex causes X-linked intractable epilepsy and neurodevelopmental regression.</title>
        <authorList>
            <person name="Falk M.J."/>
            <person name="Gai X."/>
            <person name="Shigematsu M."/>
            <person name="Vilardo E."/>
            <person name="Takase R."/>
            <person name="McCormick E."/>
            <person name="Christian T."/>
            <person name="Place E."/>
            <person name="Pierce E.A."/>
            <person name="Consugar M."/>
            <person name="Gamper H.B."/>
            <person name="Rossmanith W."/>
            <person name="Hou Y.M."/>
        </authorList>
    </citation>
    <scope>VARIANT HSD10MD GLU-212</scope>
    <scope>FUNCTION</scope>
    <scope>CATALYTIC ACTIVITY</scope>
    <scope>INTERACTION WITH TRMT10C</scope>
    <scope>CHARACTERIZATION OF VARIANT HSD10MD GLU-212</scope>
</reference>
<reference key="34">
    <citation type="journal article" date="2017" name="Biochim. Biophys. Acta">
        <title>Novel patient missense mutations in the HSD17B10 gene affect dehydrogenase and mitochondrial tRNA modification functions of the encoded protein.</title>
        <authorList>
            <person name="Oerum S."/>
            <person name="Roovers M."/>
            <person name="Leichsenring M."/>
            <person name="Acquaviva-Bourdain C."/>
            <person name="Beermann F."/>
            <person name="Gemperle-Britschgi C."/>
            <person name="Fouilhoux A."/>
            <person name="Korwitz-Reichelt A."/>
            <person name="Bailey H.J."/>
            <person name="Droogmans L."/>
            <person name="Oppermann U."/>
            <person name="Sass J.O."/>
            <person name="Yue W.W."/>
        </authorList>
    </citation>
    <scope>VARIANTS HSD10MD LEU-12 AND MET-176</scope>
    <scope>FUNCTION</scope>
    <scope>CATALYTIC ACTIVITY</scope>
    <scope>BIOPHYSICOCHEMICAL PROPERTIES</scope>
    <scope>SUBUNIT</scope>
    <scope>CHARACTERIZATION OF VARIANTS HSD10MD LEU-12 AND MET-176</scope>
</reference>
<organism>
    <name type="scientific">Homo sapiens</name>
    <name type="common">Human</name>
    <dbReference type="NCBI Taxonomy" id="9606"/>
    <lineage>
        <taxon>Eukaryota</taxon>
        <taxon>Metazoa</taxon>
        <taxon>Chordata</taxon>
        <taxon>Craniata</taxon>
        <taxon>Vertebrata</taxon>
        <taxon>Euteleostomi</taxon>
        <taxon>Mammalia</taxon>
        <taxon>Eutheria</taxon>
        <taxon>Euarchontoglires</taxon>
        <taxon>Primates</taxon>
        <taxon>Haplorrhini</taxon>
        <taxon>Catarrhini</taxon>
        <taxon>Hominidae</taxon>
        <taxon>Homo</taxon>
    </lineage>
</organism>
<comment type="function">
    <text evidence="2 4 10 11 12 18 19 20 21 24">Mitochondrial dehydrogenase involved in pathways of fatty acid, branched-chain amino acid and steroid metabolism (PubMed:10600649, PubMed:12917011, PubMed:18996107, PubMed:19706438, PubMed:20077426, PubMed:25925575, PubMed:26950678, PubMed:28888424, PubMed:9553139). Acts as (S)-3-hydroxyacyl-CoA dehydrogenase in mitochondrial fatty acid beta-oxidation, a major degradation pathway of fatty acids. Catalyzes the third step in the beta-oxidation cycle, namely the reversible conversion of (S)-3-hydroxyacyl-CoA to 3-ketoacyl-CoA. Preferentially accepts straight medium- and short-chain acyl-CoA substrates with highest efficiency for (3S)-hydroxybutanoyl-CoA (PubMed:10600649, PubMed:12917011, PubMed:25925575, PubMed:26950678, PubMed:9553139). Acts as 3-hydroxy-2-methylbutyryl-CoA dehydrogenase in branched-chain amino acid catabolic pathway. Catalyzes the oxidation of 3-hydroxy-2-methylbutanoyl-CoA into 2-methyl-3-oxobutanoyl-CoA, a step in isoleucine degradation pathway (PubMed:18996107, PubMed:19706438, PubMed:20077426). Has hydroxysteroid dehydrogenase activity toward steroid hormones and bile acids. Catalyzes the oxidation of 3alpha-, 17beta-, 20beta- and 21-hydroxysteroids and 7alpha- and 7beta-hydroxy bile acids (PubMed:10600649, PubMed:12917011). Oxidizes allopregnanolone/brexanolone at the 3alpha-hydroxyl group, which is known to be critical for the activation of gamma-aminobutyric acid receptors (GABAARs) chloride channel (PubMed:19706438, PubMed:28888424). Has phospholipase C-like activity toward cardiolipin and its oxidized species. Likely oxidizes the 2'-hydroxyl in the head group of cardiolipin to form a ketone intermediate that undergoes nucleophilic attack by water and fragments into diacylglycerol, dihydroxyacetone and orthophosphate. Has higher affinity for cardiolipin with oxidized fatty acids and may degrade these species during the oxidative stress response to protect cells from apoptosis (PubMed:26338420). By interacting with intracellular amyloid-beta, it may contribute to the neuronal dysfunction associated with Alzheimer disease (AD) (PubMed:9338779). Essential for structural and functional integrity of mitochondria (PubMed:20077426).</text>
</comment>
<comment type="function">
    <text evidence="9 14 15 16 18 20 21 22">In addition to mitochondrial dehydrogenase activity, moonlights as a component of mitochondrial ribonuclease P, a complex that cleaves tRNA molecules in their 5'-ends (PubMed:18984158, PubMed:24549042, PubMed:25925575, PubMed:26950678, PubMed:28888424). Together with TRMT10C/MRPP1, forms a subcomplex of the mitochondrial ribonuclease P, named MRPP1-MRPP2 subcomplex, which displays functions that are independent of the ribonuclease P activity (PubMed:23042678, PubMed:29040705). The MRPP1-MRPP2 subcomplex catalyzes the formation of N(1)-methylguanine and N(1)-methyladenine at position 9 (m1G9 and m1A9, respectively) in tRNAs; HSD17B10/MRPP2 acting as a non-catalytic subunit (PubMed:23042678, PubMed:25925575, PubMed:28888424). The MRPP1-MRPP2 subcomplex also acts as a tRNA maturation platform: following 5'-end cleavage by the mitochondrial ribonuclease P complex, the MRPP1-MRPP2 subcomplex enhances the efficiency of 3'-processing catalyzed by ELAC2, retains the tRNA product after ELAC2 processing and presents the nascent tRNA to the mitochondrial CCA tRNA nucleotidyltransferase TRNT1 enzyme (PubMed:29040705). Associates with mitochondrial DNA complexes at the nucleoids to initiate RNA processing and ribosome assembly.</text>
</comment>
<comment type="catalytic activity">
    <reaction evidence="2 4 18 20 24">
        <text>a (3S)-3-hydroxyacyl-CoA + NAD(+) = a 3-oxoacyl-CoA + NADH + H(+)</text>
        <dbReference type="Rhea" id="RHEA:22432"/>
        <dbReference type="ChEBI" id="CHEBI:15378"/>
        <dbReference type="ChEBI" id="CHEBI:57318"/>
        <dbReference type="ChEBI" id="CHEBI:57540"/>
        <dbReference type="ChEBI" id="CHEBI:57945"/>
        <dbReference type="ChEBI" id="CHEBI:90726"/>
        <dbReference type="EC" id="1.1.1.35"/>
    </reaction>
    <physiologicalReaction direction="left-to-right" evidence="29">
        <dbReference type="Rhea" id="RHEA:22433"/>
    </physiologicalReaction>
    <physiologicalReaction direction="right-to-left" evidence="28 29 33 34 36">
        <dbReference type="Rhea" id="RHEA:22434"/>
    </physiologicalReaction>
</comment>
<comment type="catalytic activity">
    <reaction evidence="10 11 12">
        <text>(2S,3S)-3-hydroxy-2-methylbutanoyl-CoA + NAD(+) = 2-methyl-3-oxobutanoyl-CoA + NADH + H(+)</text>
        <dbReference type="Rhea" id="RHEA:13281"/>
        <dbReference type="ChEBI" id="CHEBI:15378"/>
        <dbReference type="ChEBI" id="CHEBI:57312"/>
        <dbReference type="ChEBI" id="CHEBI:57335"/>
        <dbReference type="ChEBI" id="CHEBI:57540"/>
        <dbReference type="ChEBI" id="CHEBI:57945"/>
        <dbReference type="EC" id="1.1.1.178"/>
    </reaction>
    <physiologicalReaction direction="left-to-right" evidence="30 31 32">
        <dbReference type="Rhea" id="RHEA:13282"/>
    </physiologicalReaction>
</comment>
<comment type="catalytic activity">
    <reaction evidence="4">
        <text>testosterone + NAD(+) = androst-4-ene-3,17-dione + NADH + H(+)</text>
        <dbReference type="Rhea" id="RHEA:14929"/>
        <dbReference type="ChEBI" id="CHEBI:15378"/>
        <dbReference type="ChEBI" id="CHEBI:16422"/>
        <dbReference type="ChEBI" id="CHEBI:17347"/>
        <dbReference type="ChEBI" id="CHEBI:57540"/>
        <dbReference type="ChEBI" id="CHEBI:57945"/>
        <dbReference type="EC" id="1.1.1.239"/>
    </reaction>
    <physiologicalReaction direction="left-to-right" evidence="29">
        <dbReference type="Rhea" id="RHEA:14930"/>
    </physiologicalReaction>
</comment>
<comment type="catalytic activity">
    <reaction evidence="4">
        <text>5alpha-androstane-3alpha,17beta-diol + NAD(+) = 17beta-hydroxy-5alpha-androstan-3-one + NADH + H(+)</text>
        <dbReference type="Rhea" id="RHEA:42004"/>
        <dbReference type="ChEBI" id="CHEBI:15378"/>
        <dbReference type="ChEBI" id="CHEBI:16330"/>
        <dbReference type="ChEBI" id="CHEBI:36713"/>
        <dbReference type="ChEBI" id="CHEBI:57540"/>
        <dbReference type="ChEBI" id="CHEBI:57945"/>
        <dbReference type="EC" id="1.1.1.53"/>
    </reaction>
    <physiologicalReaction direction="right-to-left" evidence="29">
        <dbReference type="Rhea" id="RHEA:42006"/>
    </physiologicalReaction>
</comment>
<comment type="catalytic activity">
    <reaction evidence="2 4">
        <text>17beta-estradiol + NAD(+) = estrone + NADH + H(+)</text>
        <dbReference type="Rhea" id="RHEA:24612"/>
        <dbReference type="ChEBI" id="CHEBI:15378"/>
        <dbReference type="ChEBI" id="CHEBI:16469"/>
        <dbReference type="ChEBI" id="CHEBI:17263"/>
        <dbReference type="ChEBI" id="CHEBI:57540"/>
        <dbReference type="ChEBI" id="CHEBI:57945"/>
        <dbReference type="EC" id="1.1.1.62"/>
    </reaction>
    <physiologicalReaction direction="left-to-right" evidence="28 29">
        <dbReference type="Rhea" id="RHEA:24613"/>
    </physiologicalReaction>
</comment>
<comment type="catalytic activity">
    <reaction evidence="4">
        <text>cholate + NAD(+) = 3alpha,12alpha-dihydroxy-7-oxo-5beta-cholanate + NADH + H(+)</text>
        <dbReference type="Rhea" id="RHEA:19409"/>
        <dbReference type="ChEBI" id="CHEBI:11893"/>
        <dbReference type="ChEBI" id="CHEBI:15378"/>
        <dbReference type="ChEBI" id="CHEBI:29747"/>
        <dbReference type="ChEBI" id="CHEBI:57540"/>
        <dbReference type="ChEBI" id="CHEBI:57945"/>
        <dbReference type="EC" id="1.1.1.159"/>
    </reaction>
    <physiologicalReaction direction="left-to-right" evidence="29">
        <dbReference type="Rhea" id="RHEA:19410"/>
    </physiologicalReaction>
</comment>
<comment type="catalytic activity">
    <reaction evidence="2 4 24">
        <text>(3S)-3-hydroxybutanoyl-CoA + NAD(+) = acetoacetyl-CoA + NADH + H(+)</text>
        <dbReference type="Rhea" id="RHEA:30799"/>
        <dbReference type="ChEBI" id="CHEBI:15378"/>
        <dbReference type="ChEBI" id="CHEBI:57286"/>
        <dbReference type="ChEBI" id="CHEBI:57316"/>
        <dbReference type="ChEBI" id="CHEBI:57540"/>
        <dbReference type="ChEBI" id="CHEBI:57945"/>
    </reaction>
    <physiologicalReaction direction="left-to-right" evidence="29">
        <dbReference type="Rhea" id="RHEA:30800"/>
    </physiologicalReaction>
    <physiologicalReaction direction="right-to-left" evidence="28 33 36">
        <dbReference type="Rhea" id="RHEA:30801"/>
    </physiologicalReaction>
</comment>
<comment type="catalytic activity">
    <reaction evidence="24">
        <text>(3S)-hydroxyoctanoyl-CoA + NAD(+) = 3-oxooctanoyl-CoA + NADH + H(+)</text>
        <dbReference type="Rhea" id="RHEA:31195"/>
        <dbReference type="ChEBI" id="CHEBI:15378"/>
        <dbReference type="ChEBI" id="CHEBI:57540"/>
        <dbReference type="ChEBI" id="CHEBI:57945"/>
        <dbReference type="ChEBI" id="CHEBI:62617"/>
        <dbReference type="ChEBI" id="CHEBI:62619"/>
    </reaction>
    <physiologicalReaction direction="left-to-right" evidence="27">
        <dbReference type="Rhea" id="RHEA:31196"/>
    </physiologicalReaction>
    <physiologicalReaction direction="right-to-left" evidence="36">
        <dbReference type="Rhea" id="RHEA:31197"/>
    </physiologicalReaction>
</comment>
<comment type="catalytic activity">
    <reaction evidence="24">
        <text>(3S)-hydroxyhexadecanoyl-CoA + NAD(+) = 3-oxohexadecanoyl-CoA + NADH + H(+)</text>
        <dbReference type="Rhea" id="RHEA:31159"/>
        <dbReference type="ChEBI" id="CHEBI:15378"/>
        <dbReference type="ChEBI" id="CHEBI:57349"/>
        <dbReference type="ChEBI" id="CHEBI:57540"/>
        <dbReference type="ChEBI" id="CHEBI:57945"/>
        <dbReference type="ChEBI" id="CHEBI:62613"/>
    </reaction>
    <physiologicalReaction direction="left-to-right" evidence="27">
        <dbReference type="Rhea" id="RHEA:31160"/>
    </physiologicalReaction>
    <physiologicalReaction direction="right-to-left" evidence="36">
        <dbReference type="Rhea" id="RHEA:31161"/>
    </physiologicalReaction>
</comment>
<comment type="catalytic activity">
    <reaction evidence="4">
        <text>17beta-hydroxy-5alpha-androstan-3-one + NAD(+) = 5alpha-androstan-3,17-dione + NADH + H(+)</text>
        <dbReference type="Rhea" id="RHEA:41992"/>
        <dbReference type="ChEBI" id="CHEBI:15378"/>
        <dbReference type="ChEBI" id="CHEBI:15994"/>
        <dbReference type="ChEBI" id="CHEBI:16330"/>
        <dbReference type="ChEBI" id="CHEBI:57540"/>
        <dbReference type="ChEBI" id="CHEBI:57945"/>
    </reaction>
    <physiologicalReaction direction="left-to-right" evidence="29">
        <dbReference type="Rhea" id="RHEA:41993"/>
    </physiologicalReaction>
</comment>
<comment type="catalytic activity">
    <reaction evidence="4">
        <text>5alpha-pregnan-20beta-ol-3-one + NAD(+) = 5alpha-pregnane-3,20-dione + NADH + H(+)</text>
        <dbReference type="Rhea" id="RHEA:42008"/>
        <dbReference type="ChEBI" id="CHEBI:15378"/>
        <dbReference type="ChEBI" id="CHEBI:28952"/>
        <dbReference type="ChEBI" id="CHEBI:57540"/>
        <dbReference type="ChEBI" id="CHEBI:57945"/>
        <dbReference type="ChEBI" id="CHEBI:78594"/>
    </reaction>
    <physiologicalReaction direction="left-to-right" evidence="29">
        <dbReference type="Rhea" id="RHEA:42009"/>
    </physiologicalReaction>
</comment>
<comment type="catalytic activity">
    <reaction evidence="11 21">
        <text>3alpha-hydroxy-5alpha-pregnan-20-one + NAD(+) = 5alpha-pregnane-3,20-dione + NADH + H(+)</text>
        <dbReference type="Rhea" id="RHEA:41980"/>
        <dbReference type="ChEBI" id="CHEBI:15378"/>
        <dbReference type="ChEBI" id="CHEBI:28952"/>
        <dbReference type="ChEBI" id="CHEBI:50169"/>
        <dbReference type="ChEBI" id="CHEBI:57540"/>
        <dbReference type="ChEBI" id="CHEBI:57945"/>
    </reaction>
    <physiologicalReaction direction="left-to-right" evidence="31 35">
        <dbReference type="Rhea" id="RHEA:41981"/>
    </physiologicalReaction>
</comment>
<comment type="catalytic activity">
    <reaction evidence="4">
        <text>cortisone + NAD(+) = 17alpha-hydroxypregn-4-en-3,11,20-trione-21-al + NADH + H(+)</text>
        <dbReference type="Rhea" id="RHEA:42016"/>
        <dbReference type="ChEBI" id="CHEBI:15378"/>
        <dbReference type="ChEBI" id="CHEBI:16962"/>
        <dbReference type="ChEBI" id="CHEBI:57540"/>
        <dbReference type="ChEBI" id="CHEBI:57945"/>
        <dbReference type="ChEBI" id="CHEBI:78596"/>
    </reaction>
    <physiologicalReaction direction="left-to-right" evidence="29">
        <dbReference type="Rhea" id="RHEA:42017"/>
    </physiologicalReaction>
</comment>
<comment type="catalytic activity">
    <reaction evidence="4">
        <text>11-dehydrocorticosterone + NAD(+) = pregn-4-ene-3,11,20,21-tetraone + NADH + H(+)</text>
        <dbReference type="Rhea" id="RHEA:42020"/>
        <dbReference type="ChEBI" id="CHEBI:15378"/>
        <dbReference type="ChEBI" id="CHEBI:57540"/>
        <dbReference type="ChEBI" id="CHEBI:57945"/>
        <dbReference type="ChEBI" id="CHEBI:78600"/>
        <dbReference type="ChEBI" id="CHEBI:78601"/>
    </reaction>
    <physiologicalReaction direction="left-to-right" evidence="29">
        <dbReference type="Rhea" id="RHEA:42021"/>
    </physiologicalReaction>
</comment>
<comment type="catalytic activity">
    <reaction evidence="4">
        <text>cortisol + NAD(+) = 11beta,17alpha-dihydroxypregn-4-ene-3,20,21-trione + NADH + H(+)</text>
        <dbReference type="Rhea" id="RHEA:42012"/>
        <dbReference type="ChEBI" id="CHEBI:15378"/>
        <dbReference type="ChEBI" id="CHEBI:17650"/>
        <dbReference type="ChEBI" id="CHEBI:57540"/>
        <dbReference type="ChEBI" id="CHEBI:57945"/>
        <dbReference type="ChEBI" id="CHEBI:78595"/>
    </reaction>
    <physiologicalReaction direction="left-to-right" evidence="29">
        <dbReference type="Rhea" id="RHEA:42013"/>
    </physiologicalReaction>
</comment>
<comment type="catalytic activity">
    <reaction evidence="4">
        <text>chenodeoxycholate + NAD(+) = 7-oxolithocholate + NADH + H(+)</text>
        <dbReference type="Rhea" id="RHEA:42036"/>
        <dbReference type="ChEBI" id="CHEBI:15378"/>
        <dbReference type="ChEBI" id="CHEBI:36234"/>
        <dbReference type="ChEBI" id="CHEBI:57540"/>
        <dbReference type="ChEBI" id="CHEBI:57945"/>
        <dbReference type="ChEBI" id="CHEBI:78605"/>
    </reaction>
    <physiologicalReaction direction="left-to-right" evidence="29">
        <dbReference type="Rhea" id="RHEA:42037"/>
    </physiologicalReaction>
</comment>
<comment type="catalytic activity">
    <reaction evidence="4">
        <text>ursodeoxycholate + NAD(+) = 7-oxolithocholate + NADH + H(+)</text>
        <dbReference type="Rhea" id="RHEA:42028"/>
        <dbReference type="ChEBI" id="CHEBI:15378"/>
        <dbReference type="ChEBI" id="CHEBI:57540"/>
        <dbReference type="ChEBI" id="CHEBI:57945"/>
        <dbReference type="ChEBI" id="CHEBI:78604"/>
        <dbReference type="ChEBI" id="CHEBI:78605"/>
    </reaction>
    <physiologicalReaction direction="left-to-right" evidence="29">
        <dbReference type="Rhea" id="RHEA:42029"/>
    </physiologicalReaction>
</comment>
<comment type="catalytic activity">
    <reaction evidence="4">
        <text>3beta,7beta-dihydroxy-5beta-cholan-24-oate + NAD(+) = 3beta-hydroxy-7-oxo-5beta-cholan-24-oate + NADH + H(+)</text>
        <dbReference type="Rhea" id="RHEA:42024"/>
        <dbReference type="ChEBI" id="CHEBI:15378"/>
        <dbReference type="ChEBI" id="CHEBI:57540"/>
        <dbReference type="ChEBI" id="CHEBI:57945"/>
        <dbReference type="ChEBI" id="CHEBI:78602"/>
        <dbReference type="ChEBI" id="CHEBI:78603"/>
    </reaction>
    <physiologicalReaction direction="left-to-right" evidence="29">
        <dbReference type="Rhea" id="RHEA:42025"/>
    </physiologicalReaction>
</comment>
<comment type="activity regulation">
    <text evidence="19">The phospholipase C-like activity toward cardiolipin is inhibited by amyloid-beta peptide.</text>
</comment>
<comment type="biophysicochemical properties">
    <kinetics>
        <KM evidence="4">25.7 uM for acetoacetyl-CoA (in the presence of 0.2 mM NADH, at pH 7.0 and 25 degrees Celsius)</KM>
        <KM evidence="4">85.2 uM for beta-hydroxybutyryl-CoA (in the presence of 1 mM NAD, at pH 9.3 and 25 degrees Celsius)</KM>
        <KM evidence="4">41 uM for androsterone (in the presence of 1 mM NAD, at pH 9.3 and 25 degrees Celsius)</KM>
        <KM evidence="4">5 uM for 5-alpha-pregnan-20-beta-ol-3-one (in the presence of 1 mM NAD, at pH 9.3 and 25 degrees Celsius)</KM>
        <KM evidence="4">219 uM for isoursodeoxycholic acid (in the presence of 1 mM NAD, at pH 9.3 and 25 degrees Celsius)</KM>
        <KM evidence="4">36.4 uM for chenodeoxycholic acid (in the presence of 1 mM NAD, at pH 9.3 and 25 degrees Celsius)</KM>
        <KM evidence="4">1.7 uM for dehydrocorticosterone (in the presence of 1 mM NAD, at pH 9.3 and 25 degrees Celsius)</KM>
        <KM evidence="4">30.6 uM for NADH (in the presence of acetoacetyl-CoA, at pH 7.0 and 25 degrees Celsius)</KM>
        <KM evidence="4">42.3 uM for NAD (in the presence of beta-hydroxybutyryl-CoA, at pH 9.3 and 25 degrees Celsius)</KM>
        <KM evidence="21">69 uM for DL-3-hydroxybutyryl-CoA</KM>
        <KM evidence="21">7.7 uM for 3alpha-hydroxy-5alpha-pregnan-20-one/allopregnanolone</KM>
        <KM evidence="11">30 uM for 3alpha-hydroxy-5alpha-pregnan-20-one/allopregnanolone</KM>
        <KM evidence="19">140 uM for tetramyristoyl cardiolipin</KM>
        <KM evidence="19">148 uM for tetralinoleoyl cardiolipin</KM>
        <KM evidence="19">40 uM for oxidized tetralinoleoyl cardiolipin</KM>
        <KM evidence="11">7.1 uM for (2S,3S)-3-hydroxy-2-methylbutanoyl-CoA</KM>
        <Vmax evidence="11">14.8 umol/min/mg enzyme toward (2S,3S)-3-hydroxy-2-methylbutanoyl-CoA</Vmax>
        <Vmax evidence="11">150.0 umol/min/mg enzyme 3alpha-hydroxy-5alpha-pregnan-20-one/allopregnanolone</Vmax>
        <text evidence="21">kcat is 458 min(-1) for DL-3-hydroxybutyryl-CoA (PubMed:28888424). kcat is 706 min(-1) for allopregnanolone (PubMed:28888424).</text>
    </kinetics>
    <phDependence>
        <text evidence="4">Optimum pH is 9.3 for the dehydrogenase reaction at 25 degrees Celsius, and 7.0 for the reductase reaction at 25 degrees Celsius.</text>
    </phDependence>
</comment>
<comment type="pathway">
    <text evidence="11">Amino-acid degradation; L-isoleucine degradation.</text>
</comment>
<comment type="pathway">
    <text evidence="2 4 24">Lipid metabolism; fatty acid beta-oxidation.</text>
</comment>
<comment type="pathway">
    <text evidence="2 4">Steroid metabolism.</text>
</comment>
<comment type="pathway">
    <text evidence="4">Lipid metabolism; bile acid biosynthesis.</text>
</comment>
<comment type="subunit">
    <text evidence="6 9 12 14 18 20 21 22">Homotetramer (PubMed:15342248, PubMed:20077426, PubMed:25925575). Component of mitochondrial ribonuclease P, a complex composed of TRMT10C/MRPP1, HSD17B10/MRPP2 and PRORP/MRPP3 (PubMed:18984158, PubMed:25925575, PubMed:26950678, PubMed:28888424). Interacts with TRMT10C/MRPP1; forming the MRPP1-MRPP2 subcomplex of the mitochondrial ribonuclease P complex (PubMed:23042678, PubMed:29040705).</text>
</comment>
<comment type="interaction">
    <interactant intactId="EBI-79964">
        <id>Q99714</id>
    </interactant>
    <interactant intactId="EBI-77613">
        <id>P05067</id>
        <label>APP</label>
    </interactant>
    <organismsDiffer>false</organismsDiffer>
    <experiments>7</experiments>
</comment>
<comment type="interaction">
    <interactant intactId="EBI-79964">
        <id>Q99714</id>
    </interactant>
    <interactant intactId="EBI-821758">
        <id>PRO_0000000092</id>
        <label>APP</label>
        <dbReference type="UniProtKB" id="P05067"/>
    </interactant>
    <organismsDiffer>false</organismsDiffer>
    <experiments>2</experiments>
</comment>
<comment type="interaction">
    <interactant intactId="EBI-79964">
        <id>Q99714</id>
    </interactant>
    <interactant intactId="EBI-352560">
        <id>P13639</id>
        <label>EEF2</label>
    </interactant>
    <organismsDiffer>false</organismsDiffer>
    <experiments>3</experiments>
</comment>
<comment type="interaction">
    <interactant intactId="EBI-79964">
        <id>Q99714</id>
    </interactant>
    <interactant intactId="EBI-1055869">
        <id>Q12931</id>
        <label>TRAP1</label>
    </interactant>
    <organismsDiffer>false</organismsDiffer>
    <experiments>3</experiments>
</comment>
<comment type="interaction">
    <interactant intactId="EBI-79964">
        <id>Q99714</id>
    </interactant>
    <interactant intactId="EBI-2107046">
        <id>Q7L0Y3</id>
        <label>TRMT10C</label>
    </interactant>
    <organismsDiffer>false</organismsDiffer>
    <experiments>24</experiments>
</comment>
<comment type="interaction">
    <interactant intactId="EBI-25939412">
        <id>Q99714-2</id>
    </interactant>
    <interactant intactId="EBI-77613">
        <id>P05067</id>
        <label>APP</label>
    </interactant>
    <organismsDiffer>false</organismsDiffer>
    <experiments>3</experiments>
</comment>
<comment type="subcellular location">
    <subcellularLocation>
        <location evidence="4 9">Mitochondrion</location>
    </subcellularLocation>
    <subcellularLocation>
        <location evidence="16">Mitochondrion matrix</location>
        <location evidence="16">Mitochondrion nucleoid</location>
    </subcellularLocation>
</comment>
<comment type="alternative products">
    <event type="alternative splicing"/>
    <isoform>
        <id>Q99714-1</id>
        <name>1</name>
        <sequence type="displayed"/>
    </isoform>
    <isoform>
        <id>Q99714-2</id>
        <name>2</name>
        <sequence type="described" ref="VSP_007830"/>
    </isoform>
</comment>
<comment type="tissue specificity">
    <text evidence="23">Ubiquitously expressed in normal tissues but is overexpressed in neurons affected in AD.</text>
</comment>
<comment type="disease" evidence="3 7 8 10 11 12 13 15 17 18 19 20 21">
    <disease id="DI-00001">
        <name>HSD10 mitochondrial disease</name>
        <acronym>HSD10MD</acronym>
        <description>An X-linked multisystemic disorder with highly variable severity. Age at onset ranges from the neonatal period to early childhood. Features include progressive neurodegeneration, psychomotor retardation, loss of mental and motor skills, seizures, cardiomyopathy, and visual and hearing impairment. Some patients manifest lactic acidosis and metabolic acidosis.</description>
        <dbReference type="MIM" id="300438"/>
    </disease>
    <text>The disease is caused by variants affecting the gene represented in this entry.</text>
</comment>
<comment type="similarity">
    <text evidence="27">Belongs to the short-chain dehydrogenases/reductases (SDR) family.</text>
</comment>
<feature type="initiator methionine" description="Removed" evidence="38">
    <location>
        <position position="1"/>
    </location>
</feature>
<feature type="chain" id="PRO_0000054810" description="3-hydroxyacyl-CoA dehydrogenase type-2">
    <location>
        <begin position="2"/>
        <end position="261"/>
    </location>
</feature>
<feature type="active site" description="Proton acceptor" evidence="5">
    <location>
        <position position="168"/>
    </location>
</feature>
<feature type="binding site" evidence="6 37">
    <location>
        <position position="20"/>
    </location>
    <ligand>
        <name>NAD(+)</name>
        <dbReference type="ChEBI" id="CHEBI:57540"/>
    </ligand>
</feature>
<feature type="binding site" evidence="6 37">
    <location>
        <position position="22"/>
    </location>
    <ligand>
        <name>NAD(+)</name>
        <dbReference type="ChEBI" id="CHEBI:57540"/>
    </ligand>
</feature>
<feature type="binding site" evidence="6 37">
    <location>
        <position position="41"/>
    </location>
    <ligand>
        <name>NAD(+)</name>
        <dbReference type="ChEBI" id="CHEBI:57540"/>
    </ligand>
</feature>
<feature type="binding site" evidence="6 37">
    <location>
        <position position="64"/>
    </location>
    <ligand>
        <name>NAD(+)</name>
        <dbReference type="ChEBI" id="CHEBI:57540"/>
    </ligand>
</feature>
<feature type="binding site" evidence="6 37">
    <location>
        <position position="65"/>
    </location>
    <ligand>
        <name>NAD(+)</name>
        <dbReference type="ChEBI" id="CHEBI:57540"/>
    </ligand>
</feature>
<feature type="binding site" evidence="6 37">
    <location>
        <position position="91"/>
    </location>
    <ligand>
        <name>NAD(+)</name>
        <dbReference type="ChEBI" id="CHEBI:57540"/>
    </ligand>
</feature>
<feature type="binding site" evidence="5">
    <location>
        <position position="155"/>
    </location>
    <ligand>
        <name>substrate</name>
    </ligand>
</feature>
<feature type="binding site" evidence="6 37">
    <location>
        <position position="168"/>
    </location>
    <ligand>
        <name>NAD(+)</name>
        <dbReference type="ChEBI" id="CHEBI:57540"/>
    </ligand>
</feature>
<feature type="binding site" evidence="6 37">
    <location>
        <position position="172"/>
    </location>
    <ligand>
        <name>NAD(+)</name>
        <dbReference type="ChEBI" id="CHEBI:57540"/>
    </ligand>
</feature>
<feature type="binding site" evidence="6 37">
    <location>
        <position position="201"/>
    </location>
    <ligand>
        <name>NAD(+)</name>
        <dbReference type="ChEBI" id="CHEBI:57540"/>
    </ligand>
</feature>
<feature type="binding site" evidence="6 37">
    <location>
        <position position="203"/>
    </location>
    <ligand>
        <name>NAD(+)</name>
        <dbReference type="ChEBI" id="CHEBI:57540"/>
    </ligand>
</feature>
<feature type="modified residue" description="N-acetylalanine" evidence="38">
    <location>
        <position position="2"/>
    </location>
</feature>
<feature type="modified residue" description="N6-acetyllysine; alternate" evidence="1">
    <location>
        <position position="53"/>
    </location>
</feature>
<feature type="modified residue" description="N6-succinyllysine; alternate" evidence="1">
    <location>
        <position position="53"/>
    </location>
</feature>
<feature type="modified residue" description="N6-acetyllysine" evidence="1">
    <location>
        <position position="69"/>
    </location>
</feature>
<feature type="modified residue" description="N6-acetyllysine" evidence="1">
    <location>
        <position position="99"/>
    </location>
</feature>
<feature type="modified residue" description="N6-acetyllysine" evidence="1">
    <location>
        <position position="105"/>
    </location>
</feature>
<feature type="modified residue" description="N6-acetyllysine; alternate" evidence="1">
    <location>
        <position position="212"/>
    </location>
</feature>
<feature type="modified residue" description="N6-succinyllysine; alternate" evidence="1">
    <location>
        <position position="212"/>
    </location>
</feature>
<feature type="splice variant" id="VSP_007830" description="In isoform 2." evidence="25">
    <location>
        <begin position="191"/>
        <end position="199"/>
    </location>
</feature>
<feature type="sequence variant" id="VAR_080049" description="In HSD10MD; decreased dehydrogenase activity; decreased tRNA methylation; decreased mitochondrial tRNA 5'-end processing." evidence="21">
    <original>V</original>
    <variation>L</variation>
    <location>
        <position position="12"/>
    </location>
</feature>
<feature type="sequence variant" id="VAR_078863" description="In HSD10MD; uncertain significance; dbSNP:rs104886492." evidence="13">
    <original>V</original>
    <variation>A</variation>
    <location>
        <position position="65"/>
    </location>
</feature>
<feature type="sequence variant" id="VAR_078864" description="In HSD10MD; decreased 3-hydroxy-2-methylbutyryl-CoA dehydrogenase activity; no effect on NAD(+) binding; complete loss of phospholipase C-like activity toward cardiolipin; dbSNP:rs587777651." evidence="12 19">
    <original>D</original>
    <variation>G</variation>
    <location>
        <position position="86"/>
    </location>
</feature>
<feature type="sequence variant" id="VAR_015987" description="In HSD10MD; dbSNP:rs28935476." evidence="3">
    <original>L</original>
    <variation>V</variation>
    <location>
        <position position="122"/>
    </location>
</feature>
<feature type="sequence variant" id="VAR_015988" description="In HSD10MD; decreased stability; decreased 3-hydroxy-2-methylbutyryl-CoA dehydrogenase activity; decreased mitochondrial tRNA 5'-end processing; decreased tRNA methylation; does not affect homotetramerization; complete loss of phospholipase C-like activity toward cardiolipin; dbSNP:rs28935475." evidence="3 7 10 11 12 15 18 19">
    <original>R</original>
    <variation>C</variation>
    <location>
        <position position="130"/>
    </location>
</feature>
<feature type="sequence variant" id="VAR_078865" description="In HSD10MD; loss of 3-hydroxy-2-methylbutyryl-CoA dehydrogenase activity; does not bind NAD(+); complete loss of phospholipase C-like activity toward cardiolipin." evidence="12 15 19">
    <original>Q</original>
    <variation>H</variation>
    <location>
        <position position="165"/>
    </location>
</feature>
<feature type="sequence variant" id="VAR_080050" description="In HSD10MD; decreased dehydrogenase activity; strongly decreased tRNA methylation; strongly decreased mitochondrial tRNA 5'-end processing." evidence="21">
    <original>V</original>
    <variation>M</variation>
    <location>
        <position position="176"/>
    </location>
</feature>
<feature type="sequence variant" id="VAR_080051" description="In HSD10MD; decreased 3-hydroxyacyl-CoA dehydrogenase activity; decreased mitochondrial tRNA 5'-end processing; decreased tRNA methylation; does not affect homotetramerization." evidence="10 18">
    <original>P</original>
    <variation>S</variation>
    <location>
        <position position="210"/>
    </location>
</feature>
<feature type="sequence variant" id="VAR_078866" description="In HSD10MD; 4-fold decrease of 3-hydroxyacyl-CoA dehydrogenase activity; decreased interaction with TRMT10C; decreased function in mitochondrial tRNA methylation; decreased function in mitochondrial tRNA processing; dbSNP:rs886041974." evidence="20">
    <original>K</original>
    <variation>E</variation>
    <location>
        <position position="212"/>
    </location>
</feature>
<feature type="sequence variant" id="VAR_080052" description="In HSD10MD; strongly decreased 3-hydroxyacyl-CoA dehydrogenase activity; abolished mitochondrial tRNA 5'-end processing; abolished tRNA methylation; impaired homotetramerization; dbSNP:rs1556894502." evidence="10 18">
    <original>R</original>
    <variation>Q</variation>
    <location>
        <position position="226"/>
    </location>
</feature>
<feature type="sequence variant" id="VAR_032093" description="In HSD10MD; strongly decreased 3-hydroxyacyl-CoA dehydrogenase activity; abolished mitochondrial tRNA 5'-end processing; abolished tRNA methylation; impaired homotetramerization; dbSNP:rs122461163." evidence="7 10 18">
    <original>N</original>
    <variation>S</variation>
    <location>
        <position position="247"/>
    </location>
</feature>
<feature type="sequence variant" id="VAR_078867" description="In HSD10MD; decreased 3-hydroxy-2-methylbutyryl-CoA dehydrogenase activity; dbSNP:rs62626305." evidence="11">
    <original>E</original>
    <variation>Q</variation>
    <location>
        <position position="249"/>
    </location>
</feature>
<feature type="mutagenesis site" description="Decreased dehydrogenase activity. Does not affect mitochondrial tRNA 5'-end processing. Does not affect tRNA methylation." evidence="14 18">
    <original>S</original>
    <variation>F</variation>
    <location>
        <position position="20"/>
    </location>
</feature>
<feature type="mutagenesis site" description="Abolishes dehydrogenase activity. Does not affect mitochondrial tRNA 5'-end processing. Does not affect tRNA methylation. Does not affect homotetramerization." evidence="14 18">
    <original>K</original>
    <variation>A</variation>
    <location>
        <position position="172"/>
    </location>
</feature>
<feature type="strand" evidence="39">
    <location>
        <begin position="12"/>
        <end position="16"/>
    </location>
</feature>
<feature type="turn" evidence="39">
    <location>
        <begin position="17"/>
        <end position="19"/>
    </location>
</feature>
<feature type="helix" evidence="39">
    <location>
        <begin position="21"/>
        <end position="32"/>
    </location>
</feature>
<feature type="strand" evidence="39">
    <location>
        <begin position="36"/>
        <end position="41"/>
    </location>
</feature>
<feature type="helix" evidence="40">
    <location>
        <begin position="43"/>
        <end position="45"/>
    </location>
</feature>
<feature type="helix" evidence="39">
    <location>
        <begin position="47"/>
        <end position="54"/>
    </location>
</feature>
<feature type="strand" evidence="39">
    <location>
        <begin position="58"/>
        <end position="62"/>
    </location>
</feature>
<feature type="helix" evidence="39">
    <location>
        <begin position="68"/>
        <end position="82"/>
    </location>
</feature>
<feature type="strand" evidence="39">
    <location>
        <begin position="87"/>
        <end position="90"/>
    </location>
</feature>
<feature type="strand" evidence="39">
    <location>
        <begin position="100"/>
        <end position="102"/>
    </location>
</feature>
<feature type="turn" evidence="39">
    <location>
        <begin position="103"/>
        <end position="106"/>
    </location>
</feature>
<feature type="helix" evidence="39">
    <location>
        <begin position="111"/>
        <end position="121"/>
    </location>
</feature>
<feature type="helix" evidence="39">
    <location>
        <begin position="123"/>
        <end position="136"/>
    </location>
</feature>
<feature type="strand" evidence="39">
    <location>
        <begin position="148"/>
        <end position="153"/>
    </location>
</feature>
<feature type="helix" evidence="39">
    <location>
        <begin position="157"/>
        <end position="160"/>
    </location>
</feature>
<feature type="helix" evidence="39">
    <location>
        <begin position="166"/>
        <end position="186"/>
    </location>
</feature>
<feature type="helix" evidence="39">
    <location>
        <begin position="187"/>
        <end position="189"/>
    </location>
</feature>
<feature type="strand" evidence="39">
    <location>
        <begin position="191"/>
        <end position="198"/>
    </location>
</feature>
<feature type="strand" evidence="41">
    <location>
        <begin position="200"/>
        <end position="203"/>
    </location>
</feature>
<feature type="helix" evidence="41">
    <location>
        <begin position="204"/>
        <end position="207"/>
    </location>
</feature>
<feature type="helix" evidence="39">
    <location>
        <begin position="216"/>
        <end position="219"/>
    </location>
</feature>
<feature type="strand" evidence="39">
    <location>
        <begin position="222"/>
        <end position="224"/>
    </location>
</feature>
<feature type="helix" evidence="39">
    <location>
        <begin position="230"/>
        <end position="242"/>
    </location>
</feature>
<feature type="strand" evidence="39">
    <location>
        <begin position="250"/>
        <end position="254"/>
    </location>
</feature>